<evidence type="ECO:0000250" key="1">
    <source>
        <dbReference type="UniProtKB" id="P01026"/>
    </source>
</evidence>
<evidence type="ECO:0000255" key="2">
    <source>
        <dbReference type="PROSITE-ProRule" id="PRU00022"/>
    </source>
</evidence>
<evidence type="ECO:0000255" key="3">
    <source>
        <dbReference type="PROSITE-ProRule" id="PRU00295"/>
    </source>
</evidence>
<evidence type="ECO:0000256" key="4">
    <source>
        <dbReference type="SAM" id="MobiDB-lite"/>
    </source>
</evidence>
<evidence type="ECO:0000269" key="5">
    <source>
    </source>
</evidence>
<evidence type="ECO:0000269" key="6">
    <source>
    </source>
</evidence>
<evidence type="ECO:0000269" key="7">
    <source>
    </source>
</evidence>
<evidence type="ECO:0000269" key="8">
    <source>
    </source>
</evidence>
<evidence type="ECO:0000269" key="9">
    <source>
    </source>
</evidence>
<evidence type="ECO:0000269" key="10">
    <source>
    </source>
</evidence>
<evidence type="ECO:0000269" key="11">
    <source>
    </source>
</evidence>
<evidence type="ECO:0000269" key="12">
    <source>
    </source>
</evidence>
<evidence type="ECO:0000269" key="13">
    <source>
    </source>
</evidence>
<evidence type="ECO:0000269" key="14">
    <source>
    </source>
</evidence>
<evidence type="ECO:0000269" key="15">
    <source>
    </source>
</evidence>
<evidence type="ECO:0000269" key="16">
    <source>
    </source>
</evidence>
<evidence type="ECO:0000269" key="17">
    <source>
    </source>
</evidence>
<evidence type="ECO:0000269" key="18">
    <source>
    </source>
</evidence>
<evidence type="ECO:0000269" key="19">
    <source>
    </source>
</evidence>
<evidence type="ECO:0000269" key="20">
    <source>
    </source>
</evidence>
<evidence type="ECO:0000269" key="21">
    <source>
    </source>
</evidence>
<evidence type="ECO:0000269" key="22">
    <source>
    </source>
</evidence>
<evidence type="ECO:0000269" key="23">
    <source>
    </source>
</evidence>
<evidence type="ECO:0000269" key="24">
    <source>
    </source>
</evidence>
<evidence type="ECO:0000269" key="25">
    <source>
    </source>
</evidence>
<evidence type="ECO:0000269" key="26">
    <source>
    </source>
</evidence>
<evidence type="ECO:0000269" key="27">
    <source>
    </source>
</evidence>
<evidence type="ECO:0000269" key="28">
    <source>
    </source>
</evidence>
<evidence type="ECO:0000269" key="29">
    <source>
    </source>
</evidence>
<evidence type="ECO:0000269" key="30">
    <source>
    </source>
</evidence>
<evidence type="ECO:0000269" key="31">
    <source>
    </source>
</evidence>
<evidence type="ECO:0000269" key="32">
    <source>
    </source>
</evidence>
<evidence type="ECO:0000269" key="33">
    <source>
    </source>
</evidence>
<evidence type="ECO:0000269" key="34">
    <source>
    </source>
</evidence>
<evidence type="ECO:0000269" key="35">
    <source>
    </source>
</evidence>
<evidence type="ECO:0000269" key="36">
    <source>
    </source>
</evidence>
<evidence type="ECO:0000269" key="37">
    <source>
    </source>
</evidence>
<evidence type="ECO:0000269" key="38">
    <source>
    </source>
</evidence>
<evidence type="ECO:0000269" key="39">
    <source>
    </source>
</evidence>
<evidence type="ECO:0000269" key="40">
    <source>
    </source>
</evidence>
<evidence type="ECO:0000269" key="41">
    <source>
    </source>
</evidence>
<evidence type="ECO:0000269" key="42">
    <source>
    </source>
</evidence>
<evidence type="ECO:0000269" key="43">
    <source>
    </source>
</evidence>
<evidence type="ECO:0000269" key="44">
    <source>
    </source>
</evidence>
<evidence type="ECO:0000269" key="45">
    <source>
    </source>
</evidence>
<evidence type="ECO:0000269" key="46">
    <source>
    </source>
</evidence>
<evidence type="ECO:0000269" key="47">
    <source>
    </source>
</evidence>
<evidence type="ECO:0000269" key="48">
    <source>
    </source>
</evidence>
<evidence type="ECO:0000269" key="49">
    <source>
    </source>
</evidence>
<evidence type="ECO:0000269" key="50">
    <source>
    </source>
</evidence>
<evidence type="ECO:0000269" key="51">
    <source>
    </source>
</evidence>
<evidence type="ECO:0000269" key="52">
    <source>
    </source>
</evidence>
<evidence type="ECO:0000269" key="53">
    <source>
    </source>
</evidence>
<evidence type="ECO:0000269" key="54">
    <source>
    </source>
</evidence>
<evidence type="ECO:0000269" key="55">
    <source>
    </source>
</evidence>
<evidence type="ECO:0000269" key="56">
    <source>
    </source>
</evidence>
<evidence type="ECO:0000269" key="57">
    <source>
    </source>
</evidence>
<evidence type="ECO:0000269" key="58">
    <source>
    </source>
</evidence>
<evidence type="ECO:0000269" key="59">
    <source>
    </source>
</evidence>
<evidence type="ECO:0000269" key="60">
    <source>
    </source>
</evidence>
<evidence type="ECO:0000269" key="61">
    <source>
    </source>
</evidence>
<evidence type="ECO:0000269" key="62">
    <source>
    </source>
</evidence>
<evidence type="ECO:0000269" key="63">
    <source>
    </source>
</evidence>
<evidence type="ECO:0000269" key="64">
    <source>
    </source>
</evidence>
<evidence type="ECO:0000269" key="65">
    <source>
    </source>
</evidence>
<evidence type="ECO:0000269" key="66">
    <source>
    </source>
</evidence>
<evidence type="ECO:0000269" key="67">
    <source>
    </source>
</evidence>
<evidence type="ECO:0000269" key="68">
    <source>
    </source>
</evidence>
<evidence type="ECO:0000269" key="69">
    <source>
    </source>
</evidence>
<evidence type="ECO:0000269" key="70">
    <source>
    </source>
</evidence>
<evidence type="ECO:0000269" key="71">
    <source>
    </source>
</evidence>
<evidence type="ECO:0000269" key="72">
    <source>
    </source>
</evidence>
<evidence type="ECO:0000269" key="73">
    <source>
    </source>
</evidence>
<evidence type="ECO:0000269" key="74">
    <source>
    </source>
</evidence>
<evidence type="ECO:0000269" key="75">
    <source>
    </source>
</evidence>
<evidence type="ECO:0000269" key="76">
    <source>
    </source>
</evidence>
<evidence type="ECO:0000269" key="77">
    <source>
    </source>
</evidence>
<evidence type="ECO:0000269" key="78">
    <source>
    </source>
</evidence>
<evidence type="ECO:0000269" key="79">
    <source>
    </source>
</evidence>
<evidence type="ECO:0000269" key="80">
    <source>
    </source>
</evidence>
<evidence type="ECO:0000269" key="81">
    <source>
    </source>
</evidence>
<evidence type="ECO:0000269" key="82">
    <source ref="2"/>
</evidence>
<evidence type="ECO:0000303" key="83">
    <source>
    </source>
</evidence>
<evidence type="ECO:0000303" key="84">
    <source>
    </source>
</evidence>
<evidence type="ECO:0000303" key="85">
    <source>
    </source>
</evidence>
<evidence type="ECO:0000303" key="86">
    <source>
    </source>
</evidence>
<evidence type="ECO:0000303" key="87">
    <source>
    </source>
</evidence>
<evidence type="ECO:0000303" key="88">
    <source>
    </source>
</evidence>
<evidence type="ECO:0000305" key="89"/>
<evidence type="ECO:0000305" key="90">
    <source>
    </source>
</evidence>
<evidence type="ECO:0000305" key="91">
    <source>
    </source>
</evidence>
<evidence type="ECO:0000305" key="92">
    <source>
    </source>
</evidence>
<evidence type="ECO:0000312" key="93">
    <source>
        <dbReference type="HGNC" id="HGNC:1318"/>
    </source>
</evidence>
<evidence type="ECO:0007744" key="94">
    <source>
        <dbReference type="PDB" id="1C3D"/>
    </source>
</evidence>
<evidence type="ECO:0007744" key="95">
    <source>
        <dbReference type="PDB" id="1GHQ"/>
    </source>
</evidence>
<evidence type="ECO:0007744" key="96">
    <source>
        <dbReference type="PDB" id="1W2S"/>
    </source>
</evidence>
<evidence type="ECO:0007744" key="97">
    <source>
        <dbReference type="PDB" id="2A73"/>
    </source>
</evidence>
<evidence type="ECO:0007744" key="98">
    <source>
        <dbReference type="PDB" id="2A74"/>
    </source>
</evidence>
<evidence type="ECO:0007744" key="99">
    <source>
        <dbReference type="PDB" id="2I07"/>
    </source>
</evidence>
<evidence type="ECO:0007744" key="100">
    <source>
        <dbReference type="PDB" id="2ICE"/>
    </source>
</evidence>
<evidence type="ECO:0007744" key="101">
    <source>
        <dbReference type="PDB" id="2ICF"/>
    </source>
</evidence>
<evidence type="ECO:0007744" key="102">
    <source>
        <dbReference type="PDB" id="2QKI"/>
    </source>
</evidence>
<evidence type="ECO:0007744" key="103">
    <source>
        <dbReference type="PDB" id="2WIN"/>
    </source>
</evidence>
<evidence type="ECO:0007744" key="104">
    <source>
        <dbReference type="PDB" id="3OXU"/>
    </source>
</evidence>
<evidence type="ECO:0007744" key="105">
    <source>
        <dbReference type="PDB" id="5O35"/>
    </source>
</evidence>
<evidence type="ECO:0007744" key="106">
    <source>
        <dbReference type="PDB" id="6RUR"/>
    </source>
</evidence>
<evidence type="ECO:0007744" key="107">
    <source>
        <dbReference type="PDB" id="6RUV"/>
    </source>
</evidence>
<evidence type="ECO:0007829" key="108">
    <source>
        <dbReference type="PDB" id="1GHQ"/>
    </source>
</evidence>
<evidence type="ECO:0007829" key="109">
    <source>
        <dbReference type="PDB" id="2A73"/>
    </source>
</evidence>
<evidence type="ECO:0007829" key="110">
    <source>
        <dbReference type="PDB" id="2A74"/>
    </source>
</evidence>
<evidence type="ECO:0007829" key="111">
    <source>
        <dbReference type="PDB" id="2ICE"/>
    </source>
</evidence>
<evidence type="ECO:0007829" key="112">
    <source>
        <dbReference type="PDB" id="2NOJ"/>
    </source>
</evidence>
<evidence type="ECO:0007829" key="113">
    <source>
        <dbReference type="PDB" id="2QKI"/>
    </source>
</evidence>
<evidence type="ECO:0007829" key="114">
    <source>
        <dbReference type="PDB" id="2WII"/>
    </source>
</evidence>
<evidence type="ECO:0007829" key="115">
    <source>
        <dbReference type="PDB" id="2WY7"/>
    </source>
</evidence>
<evidence type="ECO:0007829" key="116">
    <source>
        <dbReference type="PDB" id="2WY8"/>
    </source>
</evidence>
<evidence type="ECO:0007829" key="117">
    <source>
        <dbReference type="PDB" id="2XWB"/>
    </source>
</evidence>
<evidence type="ECO:0007829" key="118">
    <source>
        <dbReference type="PDB" id="3G6J"/>
    </source>
</evidence>
<evidence type="ECO:0007829" key="119">
    <source>
        <dbReference type="PDB" id="3L3O"/>
    </source>
</evidence>
<evidence type="ECO:0007829" key="120">
    <source>
        <dbReference type="PDB" id="3OXU"/>
    </source>
</evidence>
<evidence type="ECO:0007829" key="121">
    <source>
        <dbReference type="PDB" id="3T4A"/>
    </source>
</evidence>
<evidence type="ECO:0007829" key="122">
    <source>
        <dbReference type="PDB" id="4HW5"/>
    </source>
</evidence>
<evidence type="ECO:0007829" key="123">
    <source>
        <dbReference type="PDB" id="4I6O"/>
    </source>
</evidence>
<evidence type="ECO:0007829" key="124">
    <source>
        <dbReference type="PDB" id="5FO7"/>
    </source>
</evidence>
<evidence type="ECO:0007829" key="125">
    <source>
        <dbReference type="PDB" id="5FO8"/>
    </source>
</evidence>
<evidence type="ECO:0007829" key="126">
    <source>
        <dbReference type="PDB" id="5FOB"/>
    </source>
</evidence>
<evidence type="ECO:0007829" key="127">
    <source>
        <dbReference type="PDB" id="6EHG"/>
    </source>
</evidence>
<evidence type="ECO:0007829" key="128">
    <source>
        <dbReference type="PDB" id="6RMU"/>
    </source>
</evidence>
<evidence type="ECO:0007829" key="129">
    <source>
        <dbReference type="PDB" id="7AKK"/>
    </source>
</evidence>
<evidence type="ECO:0007829" key="130">
    <source>
        <dbReference type="PDB" id="7BAG"/>
    </source>
</evidence>
<evidence type="ECO:0007829" key="131">
    <source>
        <dbReference type="PDB" id="7TV9"/>
    </source>
</evidence>
<evidence type="ECO:0007829" key="132">
    <source>
        <dbReference type="PDB" id="8ENU"/>
    </source>
</evidence>
<evidence type="ECO:0007829" key="133">
    <source>
        <dbReference type="PDB" id="8HK2"/>
    </source>
</evidence>
<evidence type="ECO:0007829" key="134">
    <source>
        <dbReference type="PDB" id="8I9L"/>
    </source>
</evidence>
<evidence type="ECO:0007829" key="135">
    <source>
        <dbReference type="PDB" id="8OQ3"/>
    </source>
</evidence>
<evidence type="ECO:0007829" key="136">
    <source>
        <dbReference type="PDB" id="8OVB"/>
    </source>
</evidence>
<protein>
    <recommendedName>
        <fullName evidence="86">Complement C3</fullName>
    </recommendedName>
    <alternativeName>
        <fullName>C3 and PZP-like alpha-2-macroglobulin domain-containing protein 1</fullName>
    </alternativeName>
    <component>
        <recommendedName>
            <fullName>Complement C3 beta chain</fullName>
        </recommendedName>
    </component>
    <component>
        <recommendedName>
            <fullName>C3-beta-c</fullName>
            <shortName>C3bc</shortName>
        </recommendedName>
    </component>
    <component>
        <recommendedName>
            <fullName>Complement C3 alpha chain</fullName>
        </recommendedName>
    </component>
    <component>
        <recommendedName>
            <fullName evidence="83">C3a anaphylatoxin</fullName>
        </recommendedName>
    </component>
    <component>
        <recommendedName>
            <fullName evidence="87">Acylation stimulating protein</fullName>
            <shortName evidence="88">ASP</shortName>
        </recommendedName>
        <alternativeName>
            <fullName evidence="84">C3adesArg</fullName>
        </alternativeName>
    </component>
    <component>
        <recommendedName>
            <fullName>Complement C3b</fullName>
        </recommendedName>
        <alternativeName>
            <fullName>Complement C3b-alpha' chain</fullName>
        </alternativeName>
    </component>
    <component>
        <recommendedName>
            <fullName>Complement C3c alpha' chain fragment 1</fullName>
        </recommendedName>
    </component>
    <component>
        <recommendedName>
            <fullName>Complement C3dg fragment</fullName>
        </recommendedName>
    </component>
    <component>
        <recommendedName>
            <fullName>Complement C3g fragment</fullName>
        </recommendedName>
    </component>
    <component>
        <recommendedName>
            <fullName>Complement C3d fragment</fullName>
        </recommendedName>
    </component>
    <component>
        <recommendedName>
            <fullName>Complement C3f fragment</fullName>
        </recommendedName>
    </component>
    <component>
        <recommendedName>
            <fullName>Complement C3c alpha' chain fragment 2</fullName>
        </recommendedName>
    </component>
</protein>
<gene>
    <name evidence="86 93" type="primary">C3</name>
    <name type="synonym">CPAMD1</name>
</gene>
<dbReference type="EMBL" id="K02765">
    <property type="protein sequence ID" value="AAA85332.1"/>
    <property type="molecule type" value="mRNA"/>
</dbReference>
<dbReference type="EMBL" id="AY513239">
    <property type="protein sequence ID" value="AAR89906.1"/>
    <property type="molecule type" value="Genomic_DNA"/>
</dbReference>
<dbReference type="EMBL" id="CH471139">
    <property type="protein sequence ID" value="EAW69071.1"/>
    <property type="molecule type" value="Genomic_DNA"/>
</dbReference>
<dbReference type="EMBL" id="BC150179">
    <property type="protein sequence ID" value="AAI50180.1"/>
    <property type="molecule type" value="mRNA"/>
</dbReference>
<dbReference type="EMBL" id="BC150200">
    <property type="protein sequence ID" value="AAI50201.1"/>
    <property type="molecule type" value="mRNA"/>
</dbReference>
<dbReference type="CCDS" id="CCDS32883.1"/>
<dbReference type="PIR" id="A94065">
    <property type="entry name" value="C3HU"/>
</dbReference>
<dbReference type="RefSeq" id="NP_000055.2">
    <property type="nucleotide sequence ID" value="NM_000064.4"/>
</dbReference>
<dbReference type="PDB" id="1C3D">
    <property type="method" value="X-ray"/>
    <property type="resolution" value="1.80 A"/>
    <property type="chains" value="A=996-1287"/>
</dbReference>
<dbReference type="PDB" id="1GHQ">
    <property type="method" value="X-ray"/>
    <property type="resolution" value="2.04 A"/>
    <property type="chains" value="A=996-1300"/>
</dbReference>
<dbReference type="PDB" id="1W2S">
    <property type="method" value="X-ray"/>
    <property type="chains" value="A=996-1299"/>
</dbReference>
<dbReference type="PDB" id="2A73">
    <property type="method" value="X-ray"/>
    <property type="resolution" value="3.30 A"/>
    <property type="chains" value="A=23-665, B=673-1663"/>
</dbReference>
<dbReference type="PDB" id="2A74">
    <property type="method" value="X-ray"/>
    <property type="resolution" value="2.40 A"/>
    <property type="chains" value="A/D=23-665, B/E=749-936, C/F=1321-1663"/>
</dbReference>
<dbReference type="PDB" id="2GOX">
    <property type="method" value="X-ray"/>
    <property type="resolution" value="2.20 A"/>
    <property type="chains" value="A/C=996-1287"/>
</dbReference>
<dbReference type="PDB" id="2I07">
    <property type="method" value="X-ray"/>
    <property type="resolution" value="4.00 A"/>
    <property type="chains" value="A=23-667, B=749-1663"/>
</dbReference>
<dbReference type="PDB" id="2ICE">
    <property type="method" value="X-ray"/>
    <property type="resolution" value="3.10 A"/>
    <property type="chains" value="A/D=23-664, B/E=749-954, C/F=1321-1663"/>
</dbReference>
<dbReference type="PDB" id="2ICF">
    <property type="method" value="X-ray"/>
    <property type="resolution" value="4.10 A"/>
    <property type="chains" value="A=23-664, B=749-1663"/>
</dbReference>
<dbReference type="PDB" id="2NOJ">
    <property type="method" value="X-ray"/>
    <property type="resolution" value="2.70 A"/>
    <property type="chains" value="A/C/E/G=996-1287"/>
</dbReference>
<dbReference type="PDB" id="2QKI">
    <property type="method" value="X-ray"/>
    <property type="resolution" value="2.40 A"/>
    <property type="chains" value="A/D=23-665, B/E=749-936, C/F=1321-1663"/>
</dbReference>
<dbReference type="PDB" id="2WII">
    <property type="method" value="X-ray"/>
    <property type="resolution" value="2.70 A"/>
    <property type="chains" value="A=23-667, B=749-1663"/>
</dbReference>
<dbReference type="PDB" id="2WIN">
    <property type="method" value="X-ray"/>
    <property type="resolution" value="3.90 A"/>
    <property type="chains" value="A/C/E/G=23-667, B/D/F/H=749-1663"/>
</dbReference>
<dbReference type="PDB" id="2WY7">
    <property type="method" value="X-ray"/>
    <property type="resolution" value="1.70 A"/>
    <property type="chains" value="A=996-1303"/>
</dbReference>
<dbReference type="PDB" id="2WY8">
    <property type="method" value="X-ray"/>
    <property type="resolution" value="1.70 A"/>
    <property type="chains" value="A=996-1303"/>
</dbReference>
<dbReference type="PDB" id="2XQW">
    <property type="method" value="X-ray"/>
    <property type="resolution" value="2.31 A"/>
    <property type="chains" value="A/B=996-1287"/>
</dbReference>
<dbReference type="PDB" id="2XWB">
    <property type="method" value="X-ray"/>
    <property type="resolution" value="3.49 A"/>
    <property type="chains" value="A/C=23-664, B/D=752-1663"/>
</dbReference>
<dbReference type="PDB" id="2XWJ">
    <property type="method" value="X-ray"/>
    <property type="resolution" value="4.00 A"/>
    <property type="chains" value="A/C/E/G=23-667, B/D/F/H=749-1663"/>
</dbReference>
<dbReference type="PDB" id="3D5R">
    <property type="method" value="X-ray"/>
    <property type="resolution" value="2.10 A"/>
    <property type="chains" value="A/B=996-1287"/>
</dbReference>
<dbReference type="PDB" id="3D5S">
    <property type="method" value="X-ray"/>
    <property type="resolution" value="2.30 A"/>
    <property type="chains" value="A/B=996-1287"/>
</dbReference>
<dbReference type="PDB" id="3G6J">
    <property type="method" value="X-ray"/>
    <property type="resolution" value="3.10 A"/>
    <property type="chains" value="A/C=23-666, B/D=749-1663"/>
</dbReference>
<dbReference type="PDB" id="3L3O">
    <property type="method" value="X-ray"/>
    <property type="resolution" value="3.40 A"/>
    <property type="chains" value="A/D=23-667, B/E=749-954, C/F=1321-1663"/>
</dbReference>
<dbReference type="PDB" id="3L5N">
    <property type="method" value="X-ray"/>
    <property type="resolution" value="7.54 A"/>
    <property type="chains" value="A=23-667, B=749-1663"/>
</dbReference>
<dbReference type="PDB" id="3NMS">
    <property type="method" value="X-ray"/>
    <property type="resolution" value="4.10 A"/>
    <property type="chains" value="A=23-667, B=749-954, C=1321-1663"/>
</dbReference>
<dbReference type="PDB" id="3OED">
    <property type="method" value="X-ray"/>
    <property type="resolution" value="3.16 A"/>
    <property type="chains" value="A/B=996-1303"/>
</dbReference>
<dbReference type="PDB" id="3OHX">
    <property type="method" value="X-ray"/>
    <property type="resolution" value="3.50 A"/>
    <property type="chains" value="A/D=23-667, B/E=749-954, C/F=1321-1663"/>
</dbReference>
<dbReference type="PDB" id="3OXU">
    <property type="method" value="X-ray"/>
    <property type="resolution" value="2.10 A"/>
    <property type="chains" value="A/B/C=996-1303"/>
</dbReference>
<dbReference type="PDB" id="3RJ3">
    <property type="method" value="X-ray"/>
    <property type="resolution" value="2.35 A"/>
    <property type="chains" value="A/B/C=996-1303"/>
</dbReference>
<dbReference type="PDB" id="3T4A">
    <property type="method" value="X-ray"/>
    <property type="resolution" value="3.40 A"/>
    <property type="chains" value="A/D=23-667, B/E=749-954, C/F=1321-1663"/>
</dbReference>
<dbReference type="PDB" id="4HW5">
    <property type="method" value="X-ray"/>
    <property type="resolution" value="2.25 A"/>
    <property type="chains" value="A/B=672-748"/>
</dbReference>
<dbReference type="PDB" id="4HWJ">
    <property type="method" value="X-ray"/>
    <property type="resolution" value="2.60 A"/>
    <property type="chains" value="A=672-747"/>
</dbReference>
<dbReference type="PDB" id="4I6O">
    <property type="method" value="X-ray"/>
    <property type="resolution" value="2.14 A"/>
    <property type="chains" value="A=672-748"/>
</dbReference>
<dbReference type="PDB" id="4M76">
    <property type="method" value="X-ray"/>
    <property type="resolution" value="2.80 A"/>
    <property type="chains" value="A=994-1288"/>
</dbReference>
<dbReference type="PDB" id="4ONT">
    <property type="method" value="X-ray"/>
    <property type="resolution" value="2.15 A"/>
    <property type="chains" value="A/B/C=996-1303"/>
</dbReference>
<dbReference type="PDB" id="4ZH1">
    <property type="method" value="X-ray"/>
    <property type="resolution" value="2.24 A"/>
    <property type="chains" value="A/B/C=996-1303"/>
</dbReference>
<dbReference type="PDB" id="5FO7">
    <property type="method" value="X-ray"/>
    <property type="resolution" value="2.80 A"/>
    <property type="chains" value="A=23-667, B=749-1663"/>
</dbReference>
<dbReference type="PDB" id="5FO8">
    <property type="method" value="X-ray"/>
    <property type="resolution" value="2.40 A"/>
    <property type="chains" value="A=23-667, B=749-1663"/>
</dbReference>
<dbReference type="PDB" id="5FO9">
    <property type="method" value="X-ray"/>
    <property type="resolution" value="3.30 A"/>
    <property type="chains" value="A/D=23-667, B/E=749-1663"/>
</dbReference>
<dbReference type="PDB" id="5FOA">
    <property type="method" value="X-ray"/>
    <property type="resolution" value="4.19 A"/>
    <property type="chains" value="A/C=23-667, B/D=749-1663"/>
</dbReference>
<dbReference type="PDB" id="5FOB">
    <property type="method" value="X-ray"/>
    <property type="resolution" value="2.60 A"/>
    <property type="chains" value="A=23-667, B=749-1663"/>
</dbReference>
<dbReference type="PDB" id="5NBQ">
    <property type="method" value="X-ray"/>
    <property type="resolution" value="3.18 A"/>
    <property type="chains" value="A/B/C=994-1287"/>
</dbReference>
<dbReference type="PDB" id="5O32">
    <property type="method" value="X-ray"/>
    <property type="resolution" value="4.21 A"/>
    <property type="chains" value="A/E=23-667, B/F=749-1663"/>
</dbReference>
<dbReference type="PDB" id="5O35">
    <property type="method" value="X-ray"/>
    <property type="resolution" value="4.20 A"/>
    <property type="chains" value="A=23-667, B=749-1663"/>
</dbReference>
<dbReference type="PDB" id="6EHG">
    <property type="method" value="X-ray"/>
    <property type="resolution" value="2.65 A"/>
    <property type="chains" value="A=23-665, B=749-1663"/>
</dbReference>
<dbReference type="PDB" id="6RMT">
    <property type="method" value="X-ray"/>
    <property type="resolution" value="2.00 A"/>
    <property type="chains" value="A/B=996-1303"/>
</dbReference>
<dbReference type="PDB" id="6RMU">
    <property type="method" value="X-ray"/>
    <property type="resolution" value="2.40 A"/>
    <property type="chains" value="A/B=996-1303"/>
</dbReference>
<dbReference type="PDB" id="6RUR">
    <property type="method" value="X-ray"/>
    <property type="resolution" value="6.00 A"/>
    <property type="chains" value="A/G=23-667, B/H=749-1663"/>
</dbReference>
<dbReference type="PDB" id="6RUV">
    <property type="method" value="X-ray"/>
    <property type="resolution" value="6.15 A"/>
    <property type="chains" value="A/G=23-667, B/H=749-1663"/>
</dbReference>
<dbReference type="PDB" id="6S0B">
    <property type="method" value="X-ray"/>
    <property type="resolution" value="2.31 A"/>
    <property type="chains" value="C=1517-1663"/>
</dbReference>
<dbReference type="PDB" id="6YO6">
    <property type="method" value="X-ray"/>
    <property type="resolution" value="6.00 A"/>
    <property type="chains" value="A=23-667, B=749-1663"/>
</dbReference>
<dbReference type="PDB" id="7AKK">
    <property type="method" value="X-ray"/>
    <property type="resolution" value="3.40 A"/>
    <property type="chains" value="A/E=749-1663, B/C=23-667"/>
</dbReference>
<dbReference type="PDB" id="7BAG">
    <property type="method" value="X-ray"/>
    <property type="resolution" value="2.00 A"/>
    <property type="chains" value="A=23-667, B=749-1663"/>
</dbReference>
<dbReference type="PDB" id="7NOZ">
    <property type="method" value="X-ray"/>
    <property type="resolution" value="3.90 A"/>
    <property type="chains" value="A=23-667, B=752-1663"/>
</dbReference>
<dbReference type="PDB" id="7PI6">
    <property type="method" value="X-ray"/>
    <property type="resolution" value="2.60 A"/>
    <property type="chains" value="B/D=996-1287"/>
</dbReference>
<dbReference type="PDB" id="7QIV">
    <property type="method" value="X-ray"/>
    <property type="resolution" value="2.80 A"/>
    <property type="chains" value="A=23-667, B=749-1663"/>
</dbReference>
<dbReference type="PDB" id="7TV9">
    <property type="method" value="X-ray"/>
    <property type="resolution" value="3.40 A"/>
    <property type="chains" value="A=23-667, B=749-1663"/>
</dbReference>
<dbReference type="PDB" id="7UE9">
    <property type="method" value="X-ray"/>
    <property type="resolution" value="1.75 A"/>
    <property type="chains" value="C=994-1303"/>
</dbReference>
<dbReference type="PDB" id="7ZGK">
    <property type="method" value="EM"/>
    <property type="resolution" value="3.59 A"/>
    <property type="chains" value="A=23-667, B=749-1663"/>
</dbReference>
<dbReference type="PDB" id="8ENU">
    <property type="method" value="EM"/>
    <property type="resolution" value="3.22 A"/>
    <property type="chains" value="G=23-667, H=749-1663"/>
</dbReference>
<dbReference type="PDB" id="8EOK">
    <property type="method" value="EM"/>
    <property type="resolution" value="3.53 A"/>
    <property type="chains" value="G=23-667, H=749-1663"/>
</dbReference>
<dbReference type="PDB" id="8HK2">
    <property type="method" value="EM"/>
    <property type="resolution" value="2.90 A"/>
    <property type="chains" value="D=672-748"/>
</dbReference>
<dbReference type="PDB" id="8I9L">
    <property type="method" value="EM"/>
    <property type="resolution" value="3.18 A"/>
    <property type="chains" value="D=672-748"/>
</dbReference>
<dbReference type="PDB" id="8OQ3">
    <property type="method" value="EM"/>
    <property type="resolution" value="2.90 A"/>
    <property type="chains" value="A/D=23-1663"/>
</dbReference>
<dbReference type="PDB" id="8OVB">
    <property type="method" value="EM"/>
    <property type="resolution" value="3.40 A"/>
    <property type="chains" value="A=23-664, B=749-1663"/>
</dbReference>
<dbReference type="PDB" id="8UH2">
    <property type="method" value="EM"/>
    <property type="resolution" value="3.59 A"/>
    <property type="chains" value="A/G=23-664, B/H=749-1663"/>
</dbReference>
<dbReference type="PDB" id="8UIN">
    <property type="method" value="EM"/>
    <property type="resolution" value="3.86 A"/>
    <property type="chains" value="A/G=23-664, B/H=749-1663"/>
</dbReference>
<dbReference type="PDBsum" id="1C3D"/>
<dbReference type="PDBsum" id="1GHQ"/>
<dbReference type="PDBsum" id="1W2S"/>
<dbReference type="PDBsum" id="2A73"/>
<dbReference type="PDBsum" id="2A74"/>
<dbReference type="PDBsum" id="2GOX"/>
<dbReference type="PDBsum" id="2I07"/>
<dbReference type="PDBsum" id="2ICE"/>
<dbReference type="PDBsum" id="2ICF"/>
<dbReference type="PDBsum" id="2NOJ"/>
<dbReference type="PDBsum" id="2QKI"/>
<dbReference type="PDBsum" id="2WII"/>
<dbReference type="PDBsum" id="2WIN"/>
<dbReference type="PDBsum" id="2WY7"/>
<dbReference type="PDBsum" id="2WY8"/>
<dbReference type="PDBsum" id="2XQW"/>
<dbReference type="PDBsum" id="2XWB"/>
<dbReference type="PDBsum" id="2XWJ"/>
<dbReference type="PDBsum" id="3D5R"/>
<dbReference type="PDBsum" id="3D5S"/>
<dbReference type="PDBsum" id="3G6J"/>
<dbReference type="PDBsum" id="3L3O"/>
<dbReference type="PDBsum" id="3L5N"/>
<dbReference type="PDBsum" id="3NMS"/>
<dbReference type="PDBsum" id="3OED"/>
<dbReference type="PDBsum" id="3OHX"/>
<dbReference type="PDBsum" id="3OXU"/>
<dbReference type="PDBsum" id="3RJ3"/>
<dbReference type="PDBsum" id="3T4A"/>
<dbReference type="PDBsum" id="4HW5"/>
<dbReference type="PDBsum" id="4HWJ"/>
<dbReference type="PDBsum" id="4I6O"/>
<dbReference type="PDBsum" id="4M76"/>
<dbReference type="PDBsum" id="4ONT"/>
<dbReference type="PDBsum" id="4ZH1"/>
<dbReference type="PDBsum" id="5FO7"/>
<dbReference type="PDBsum" id="5FO8"/>
<dbReference type="PDBsum" id="5FO9"/>
<dbReference type="PDBsum" id="5FOA"/>
<dbReference type="PDBsum" id="5FOB"/>
<dbReference type="PDBsum" id="5NBQ"/>
<dbReference type="PDBsum" id="5O32"/>
<dbReference type="PDBsum" id="5O35"/>
<dbReference type="PDBsum" id="6EHG"/>
<dbReference type="PDBsum" id="6RMT"/>
<dbReference type="PDBsum" id="6RMU"/>
<dbReference type="PDBsum" id="6RUR"/>
<dbReference type="PDBsum" id="6RUV"/>
<dbReference type="PDBsum" id="6S0B"/>
<dbReference type="PDBsum" id="6YO6"/>
<dbReference type="PDBsum" id="7AKK"/>
<dbReference type="PDBsum" id="7BAG"/>
<dbReference type="PDBsum" id="7NOZ"/>
<dbReference type="PDBsum" id="7PI6"/>
<dbReference type="PDBsum" id="7QIV"/>
<dbReference type="PDBsum" id="7TV9"/>
<dbReference type="PDBsum" id="7UE9"/>
<dbReference type="PDBsum" id="7ZGK"/>
<dbReference type="PDBsum" id="8ENU"/>
<dbReference type="PDBsum" id="8EOK"/>
<dbReference type="PDBsum" id="8HK2"/>
<dbReference type="PDBsum" id="8I9L"/>
<dbReference type="PDBsum" id="8OQ3"/>
<dbReference type="PDBsum" id="8OVB"/>
<dbReference type="PDBsum" id="8UH2"/>
<dbReference type="PDBsum" id="8UIN"/>
<dbReference type="EMDB" id="EMD-14707"/>
<dbReference type="EMDB" id="EMD-14708"/>
<dbReference type="EMDB" id="EMD-17103"/>
<dbReference type="EMDB" id="EMD-17209"/>
<dbReference type="EMDB" id="EMD-17325"/>
<dbReference type="EMDB" id="EMD-17326"/>
<dbReference type="EMDB" id="EMD-17327"/>
<dbReference type="EMDB" id="EMD-17328"/>
<dbReference type="EMDB" id="EMD-2403"/>
<dbReference type="EMDB" id="EMD-28279"/>
<dbReference type="EMDB" id="EMD-28378"/>
<dbReference type="EMDB" id="EMD-34842"/>
<dbReference type="EMDB" id="EMD-35275"/>
<dbReference type="EMDB" id="EMD-42244"/>
<dbReference type="EMDB" id="EMD-42300"/>
<dbReference type="SASBDB" id="P01024"/>
<dbReference type="SMR" id="P01024"/>
<dbReference type="BioGRID" id="107179">
    <property type="interactions" value="172"/>
</dbReference>
<dbReference type="ComplexPortal" id="CPX-5381">
    <property type="entry name" value="Alternative pathway fluid-phase C3 convertase complex C3(H2O)Bb"/>
</dbReference>
<dbReference type="ComplexPortal" id="CPX-973">
    <property type="entry name" value="Complement C3b complex"/>
</dbReference>
<dbReference type="CORUM" id="P01024"/>
<dbReference type="DIP" id="DIP-35180N"/>
<dbReference type="FunCoup" id="P01024">
    <property type="interactions" value="1133"/>
</dbReference>
<dbReference type="IntAct" id="P01024">
    <property type="interactions" value="107"/>
</dbReference>
<dbReference type="MINT" id="P01024"/>
<dbReference type="STRING" id="9606.ENSP00000245907"/>
<dbReference type="BindingDB" id="P01024"/>
<dbReference type="ChEMBL" id="CHEMBL4917"/>
<dbReference type="DrugBank" id="DB14803">
    <property type="generic name" value="AMY-101"/>
</dbReference>
<dbReference type="DrugBank" id="DB09130">
    <property type="generic name" value="Copper"/>
</dbReference>
<dbReference type="DrugBank" id="DB00028">
    <property type="generic name" value="Human immunoglobulin G"/>
</dbReference>
<dbReference type="DrugBank" id="DB06492">
    <property type="generic name" value="Mirococept"/>
</dbReference>
<dbReference type="DrugBank" id="DB16694">
    <property type="generic name" value="Pegcetacoplan"/>
</dbReference>
<dbReference type="DrugBank" id="DB06056">
    <property type="generic name" value="POT-4"/>
</dbReference>
<dbReference type="DrugBank" id="DB01915">
    <property type="generic name" value="S-Hydroxycysteine"/>
</dbReference>
<dbReference type="DrugBank" id="DB01593">
    <property type="generic name" value="Zinc"/>
</dbReference>
<dbReference type="DrugBank" id="DB14487">
    <property type="generic name" value="Zinc acetate"/>
</dbReference>
<dbReference type="DrugBank" id="DB14533">
    <property type="generic name" value="Zinc chloride"/>
</dbReference>
<dbReference type="DrugBank" id="DB14548">
    <property type="generic name" value="Zinc sulfate, unspecified form"/>
</dbReference>
<dbReference type="DrugCentral" id="P01024"/>
<dbReference type="MEROPS" id="I39.950"/>
<dbReference type="CarbonylDB" id="P01024"/>
<dbReference type="GlyConnect" id="110">
    <property type="glycosylation" value="35 N-Linked glycans (3 sites), 1 O-Linked glycan (1 site)"/>
</dbReference>
<dbReference type="GlyCosmos" id="P01024">
    <property type="glycosylation" value="4 sites, 51 glycans"/>
</dbReference>
<dbReference type="GlyGen" id="P01024">
    <property type="glycosylation" value="8 sites, 95 N-linked glycans (4 sites), 2 O-linked glycans (2 sites)"/>
</dbReference>
<dbReference type="iPTMnet" id="P01024"/>
<dbReference type="MetOSite" id="P01024"/>
<dbReference type="PhosphoSitePlus" id="P01024"/>
<dbReference type="SwissPalm" id="P01024"/>
<dbReference type="BioMuta" id="C3"/>
<dbReference type="DMDM" id="119370332"/>
<dbReference type="CPTAC" id="CPTAC-1239"/>
<dbReference type="CPTAC" id="non-CPTAC-1105"/>
<dbReference type="CPTAC" id="non-CPTAC-1106"/>
<dbReference type="CPTAC" id="non-CPTAC-2653"/>
<dbReference type="jPOST" id="P01024"/>
<dbReference type="MassIVE" id="P01024"/>
<dbReference type="PaxDb" id="9606-ENSP00000245907"/>
<dbReference type="PeptideAtlas" id="P01024"/>
<dbReference type="PRIDE" id="P01024"/>
<dbReference type="ProteomicsDB" id="51308"/>
<dbReference type="Pumba" id="P01024"/>
<dbReference type="ABCD" id="P01024">
    <property type="antibodies" value="22 sequenced antibodies"/>
</dbReference>
<dbReference type="Antibodypedia" id="692">
    <property type="antibodies" value="2017 antibodies from 49 providers"/>
</dbReference>
<dbReference type="DNASU" id="718"/>
<dbReference type="Ensembl" id="ENST00000245907.11">
    <property type="protein sequence ID" value="ENSP00000245907.4"/>
    <property type="gene ID" value="ENSG00000125730.18"/>
</dbReference>
<dbReference type="GeneID" id="718"/>
<dbReference type="KEGG" id="hsa:718"/>
<dbReference type="MANE-Select" id="ENST00000245907.11">
    <property type="protein sequence ID" value="ENSP00000245907.4"/>
    <property type="RefSeq nucleotide sequence ID" value="NM_000064.4"/>
    <property type="RefSeq protein sequence ID" value="NP_000055.2"/>
</dbReference>
<dbReference type="AGR" id="HGNC:1318"/>
<dbReference type="CTD" id="718"/>
<dbReference type="DisGeNET" id="718"/>
<dbReference type="GeneCards" id="C3"/>
<dbReference type="GeneReviews" id="C3"/>
<dbReference type="HGNC" id="HGNC:1318">
    <property type="gene designation" value="C3"/>
</dbReference>
<dbReference type="HPA" id="ENSG00000125730">
    <property type="expression patterns" value="Tissue enriched (liver)"/>
</dbReference>
<dbReference type="MalaCards" id="C3"/>
<dbReference type="MIM" id="120700">
    <property type="type" value="gene"/>
</dbReference>
<dbReference type="MIM" id="611378">
    <property type="type" value="phenotype"/>
</dbReference>
<dbReference type="MIM" id="612925">
    <property type="type" value="phenotype"/>
</dbReference>
<dbReference type="MIM" id="613779">
    <property type="type" value="phenotype"/>
</dbReference>
<dbReference type="neXtProt" id="NX_P01024"/>
<dbReference type="OpenTargets" id="ENSG00000125730"/>
<dbReference type="Orphanet" id="544472">
    <property type="disease" value="Atypical hemolytic uremic syndrome with complement gene abnormality"/>
</dbReference>
<dbReference type="Orphanet" id="280133">
    <property type="disease" value="Complement component 3 deficiency"/>
</dbReference>
<dbReference type="PharmGKB" id="PA25897"/>
<dbReference type="VEuPathDB" id="HostDB:ENSG00000125730"/>
<dbReference type="eggNOG" id="KOG1366">
    <property type="taxonomic scope" value="Eukaryota"/>
</dbReference>
<dbReference type="GeneTree" id="ENSGT00940000154063"/>
<dbReference type="HOGENOM" id="CLU_001634_4_0_1"/>
<dbReference type="InParanoid" id="P01024"/>
<dbReference type="OMA" id="YNYRQNE"/>
<dbReference type="OrthoDB" id="6359008at2759"/>
<dbReference type="PAN-GO" id="P01024">
    <property type="GO annotations" value="2 GO annotations based on evolutionary models"/>
</dbReference>
<dbReference type="PhylomeDB" id="P01024"/>
<dbReference type="TreeFam" id="TF313285"/>
<dbReference type="BRENDA" id="3.4.21.47">
    <property type="organism ID" value="2681"/>
</dbReference>
<dbReference type="PathwayCommons" id="P01024"/>
<dbReference type="Reactome" id="R-HSA-173736">
    <property type="pathway name" value="Alternative complement activation"/>
</dbReference>
<dbReference type="Reactome" id="R-HSA-174577">
    <property type="pathway name" value="Activation of C3 and C5"/>
</dbReference>
<dbReference type="Reactome" id="R-HSA-198933">
    <property type="pathway name" value="Immunoregulatory interactions between a Lymphoid and a non-Lymphoid cell"/>
</dbReference>
<dbReference type="Reactome" id="R-HSA-375276">
    <property type="pathway name" value="Peptide ligand-binding receptors"/>
</dbReference>
<dbReference type="Reactome" id="R-HSA-381426">
    <property type="pathway name" value="Regulation of Insulin-like Growth Factor (IGF) transport and uptake by Insulin-like Growth Factor Binding Proteins (IGFBPs)"/>
</dbReference>
<dbReference type="Reactome" id="R-HSA-418594">
    <property type="pathway name" value="G alpha (i) signalling events"/>
</dbReference>
<dbReference type="Reactome" id="R-HSA-6798695">
    <property type="pathway name" value="Neutrophil degranulation"/>
</dbReference>
<dbReference type="Reactome" id="R-HSA-8957275">
    <property type="pathway name" value="Post-translational protein phosphorylation"/>
</dbReference>
<dbReference type="Reactome" id="R-HSA-9660826">
    <property type="pathway name" value="Purinergic signaling in leishmaniasis infection"/>
</dbReference>
<dbReference type="Reactome" id="R-HSA-977606">
    <property type="pathway name" value="Regulation of Complement cascade"/>
</dbReference>
<dbReference type="SABIO-RK" id="P01024"/>
<dbReference type="SignaLink" id="P01024"/>
<dbReference type="SIGNOR" id="P01024"/>
<dbReference type="BioGRID-ORCS" id="718">
    <property type="hits" value="11 hits in 1163 CRISPR screens"/>
</dbReference>
<dbReference type="CD-CODE" id="FB4E32DD">
    <property type="entry name" value="Presynaptic clusters and postsynaptic densities"/>
</dbReference>
<dbReference type="ChiTaRS" id="C3">
    <property type="organism name" value="human"/>
</dbReference>
<dbReference type="EvolutionaryTrace" id="P01024"/>
<dbReference type="GeneWiki" id="Complement_component_3"/>
<dbReference type="GenomeRNAi" id="718"/>
<dbReference type="Pharos" id="P01024">
    <property type="development level" value="Tclin"/>
</dbReference>
<dbReference type="PRO" id="PR:P01024"/>
<dbReference type="Proteomes" id="UP000005640">
    <property type="component" value="Chromosome 19"/>
</dbReference>
<dbReference type="RNAct" id="P01024">
    <property type="molecule type" value="protein"/>
</dbReference>
<dbReference type="Bgee" id="ENSG00000125730">
    <property type="expression patterns" value="Expressed in parietal pleura and 200 other cell types or tissues"/>
</dbReference>
<dbReference type="ExpressionAtlas" id="P01024">
    <property type="expression patterns" value="baseline and differential"/>
</dbReference>
<dbReference type="GO" id="GO:0035578">
    <property type="term" value="C:azurophil granule lumen"/>
    <property type="evidence" value="ECO:0000304"/>
    <property type="project" value="Reactome"/>
</dbReference>
<dbReference type="GO" id="GO:0072562">
    <property type="term" value="C:blood microparticle"/>
    <property type="evidence" value="ECO:0007005"/>
    <property type="project" value="UniProtKB"/>
</dbReference>
<dbReference type="GO" id="GO:0009986">
    <property type="term" value="C:cell surface"/>
    <property type="evidence" value="ECO:0007669"/>
    <property type="project" value="Ensembl"/>
</dbReference>
<dbReference type="GO" id="GO:0005788">
    <property type="term" value="C:endoplasmic reticulum lumen"/>
    <property type="evidence" value="ECO:0000304"/>
    <property type="project" value="Reactome"/>
</dbReference>
<dbReference type="GO" id="GO:0070062">
    <property type="term" value="C:extracellular exosome"/>
    <property type="evidence" value="ECO:0007005"/>
    <property type="project" value="UniProtKB"/>
</dbReference>
<dbReference type="GO" id="GO:0005576">
    <property type="term" value="C:extracellular region"/>
    <property type="evidence" value="ECO:0000304"/>
    <property type="project" value="Reactome"/>
</dbReference>
<dbReference type="GO" id="GO:0005615">
    <property type="term" value="C:extracellular space"/>
    <property type="evidence" value="ECO:0000314"/>
    <property type="project" value="UniProtKB"/>
</dbReference>
<dbReference type="GO" id="GO:0005886">
    <property type="term" value="C:plasma membrane"/>
    <property type="evidence" value="ECO:0000304"/>
    <property type="project" value="Reactome"/>
</dbReference>
<dbReference type="GO" id="GO:0032991">
    <property type="term" value="C:protein-containing complex"/>
    <property type="evidence" value="ECO:0007669"/>
    <property type="project" value="Ensembl"/>
</dbReference>
<dbReference type="GO" id="GO:0034774">
    <property type="term" value="C:secretory granule lumen"/>
    <property type="evidence" value="ECO:0000304"/>
    <property type="project" value="Reactome"/>
</dbReference>
<dbReference type="GO" id="GO:0031715">
    <property type="term" value="F:C5L2 anaphylatoxin chemotactic receptor binding"/>
    <property type="evidence" value="ECO:0000314"/>
    <property type="project" value="UniProtKB"/>
</dbReference>
<dbReference type="GO" id="GO:0004866">
    <property type="term" value="F:endopeptidase inhibitor activity"/>
    <property type="evidence" value="ECO:0007669"/>
    <property type="project" value="InterPro"/>
</dbReference>
<dbReference type="GO" id="GO:0048018">
    <property type="term" value="F:receptor ligand activity"/>
    <property type="evidence" value="ECO:0000314"/>
    <property type="project" value="UniProt"/>
</dbReference>
<dbReference type="GO" id="GO:0005102">
    <property type="term" value="F:signaling receptor binding"/>
    <property type="evidence" value="ECO:0000304"/>
    <property type="project" value="ProtInc"/>
</dbReference>
<dbReference type="GO" id="GO:0097242">
    <property type="term" value="P:amyloid-beta clearance"/>
    <property type="evidence" value="ECO:0000250"/>
    <property type="project" value="ARUK-UCL"/>
</dbReference>
<dbReference type="GO" id="GO:0042113">
    <property type="term" value="P:B cell activation"/>
    <property type="evidence" value="ECO:0000314"/>
    <property type="project" value="UniProt"/>
</dbReference>
<dbReference type="GO" id="GO:0006956">
    <property type="term" value="P:complement activation"/>
    <property type="evidence" value="ECO:0000315"/>
    <property type="project" value="BHF-UCL"/>
</dbReference>
<dbReference type="GO" id="GO:0006957">
    <property type="term" value="P:complement activation, alternative pathway"/>
    <property type="evidence" value="ECO:0007669"/>
    <property type="project" value="UniProtKB-KW"/>
</dbReference>
<dbReference type="GO" id="GO:0006958">
    <property type="term" value="P:complement activation, classical pathway"/>
    <property type="evidence" value="ECO:0007669"/>
    <property type="project" value="UniProtKB-KW"/>
</dbReference>
<dbReference type="GO" id="GO:0002430">
    <property type="term" value="P:complement receptor mediated signaling pathway"/>
    <property type="evidence" value="ECO:0007669"/>
    <property type="project" value="Ensembl"/>
</dbReference>
<dbReference type="GO" id="GO:0097278">
    <property type="term" value="P:complement-dependent cytotoxicity"/>
    <property type="evidence" value="ECO:0007669"/>
    <property type="project" value="Ensembl"/>
</dbReference>
<dbReference type="GO" id="GO:0150062">
    <property type="term" value="P:complement-mediated synapse pruning"/>
    <property type="evidence" value="ECO:0000250"/>
    <property type="project" value="ARUK-UCL"/>
</dbReference>
<dbReference type="GO" id="GO:0006631">
    <property type="term" value="P:fatty acid metabolic process"/>
    <property type="evidence" value="ECO:0007669"/>
    <property type="project" value="UniProtKB-KW"/>
</dbReference>
<dbReference type="GO" id="GO:0007186">
    <property type="term" value="P:G protein-coupled receptor signaling pathway"/>
    <property type="evidence" value="ECO:0000304"/>
    <property type="project" value="ProtInc"/>
</dbReference>
<dbReference type="GO" id="GO:0006955">
    <property type="term" value="P:immune response"/>
    <property type="evidence" value="ECO:0000304"/>
    <property type="project" value="ProtInc"/>
</dbReference>
<dbReference type="GO" id="GO:0006954">
    <property type="term" value="P:inflammatory response"/>
    <property type="evidence" value="ECO:0007669"/>
    <property type="project" value="UniProtKB-KW"/>
</dbReference>
<dbReference type="GO" id="GO:0016322">
    <property type="term" value="P:neuron remodeling"/>
    <property type="evidence" value="ECO:0000250"/>
    <property type="project" value="ARUK-UCL"/>
</dbReference>
<dbReference type="GO" id="GO:0035846">
    <property type="term" value="P:oviduct epithelium development"/>
    <property type="evidence" value="ECO:0007669"/>
    <property type="project" value="Ensembl"/>
</dbReference>
<dbReference type="GO" id="GO:0001970">
    <property type="term" value="P:positive regulation of activation of membrane attack complex"/>
    <property type="evidence" value="ECO:0007669"/>
    <property type="project" value="Ensembl"/>
</dbReference>
<dbReference type="GO" id="GO:0045766">
    <property type="term" value="P:positive regulation of angiogenesis"/>
    <property type="evidence" value="ECO:0007669"/>
    <property type="project" value="Ensembl"/>
</dbReference>
<dbReference type="GO" id="GO:2000427">
    <property type="term" value="P:positive regulation of apoptotic cell clearance"/>
    <property type="evidence" value="ECO:0000315"/>
    <property type="project" value="BHF-UCL"/>
</dbReference>
<dbReference type="GO" id="GO:0010828">
    <property type="term" value="P:positive regulation of D-glucose transmembrane transport"/>
    <property type="evidence" value="ECO:0000314"/>
    <property type="project" value="UniProtKB"/>
</dbReference>
<dbReference type="GO" id="GO:0045745">
    <property type="term" value="P:positive regulation of G protein-coupled receptor signaling pathway"/>
    <property type="evidence" value="ECO:0000314"/>
    <property type="project" value="UniProtKB"/>
</dbReference>
<dbReference type="GO" id="GO:0010884">
    <property type="term" value="P:positive regulation of lipid storage"/>
    <property type="evidence" value="ECO:0000314"/>
    <property type="project" value="UniProtKB"/>
</dbReference>
<dbReference type="GO" id="GO:0060100">
    <property type="term" value="P:positive regulation of phagocytosis, engulfment"/>
    <property type="evidence" value="ECO:0000250"/>
    <property type="project" value="ARUK-UCL"/>
</dbReference>
<dbReference type="GO" id="GO:0001934">
    <property type="term" value="P:positive regulation of protein phosphorylation"/>
    <property type="evidence" value="ECO:0000314"/>
    <property type="project" value="UniProtKB"/>
</dbReference>
<dbReference type="GO" id="GO:0048260">
    <property type="term" value="P:positive regulation of receptor-mediated endocytosis"/>
    <property type="evidence" value="ECO:0000250"/>
    <property type="project" value="ARUK-UCL"/>
</dbReference>
<dbReference type="GO" id="GO:0001798">
    <property type="term" value="P:positive regulation of type IIa hypersensitivity"/>
    <property type="evidence" value="ECO:0007669"/>
    <property type="project" value="Ensembl"/>
</dbReference>
<dbReference type="GO" id="GO:0010575">
    <property type="term" value="P:positive regulation of vascular endothelial growth factor production"/>
    <property type="evidence" value="ECO:0000314"/>
    <property type="project" value="BHF-UCL"/>
</dbReference>
<dbReference type="GO" id="GO:0010866">
    <property type="term" value="P:regulation of triglyceride biosynthetic process"/>
    <property type="evidence" value="ECO:0000314"/>
    <property type="project" value="UniProtKB"/>
</dbReference>
<dbReference type="GO" id="GO:0009617">
    <property type="term" value="P:response to bacterium"/>
    <property type="evidence" value="ECO:0007669"/>
    <property type="project" value="Ensembl"/>
</dbReference>
<dbReference type="GO" id="GO:0007165">
    <property type="term" value="P:signal transduction"/>
    <property type="evidence" value="ECO:0000304"/>
    <property type="project" value="ProtInc"/>
</dbReference>
<dbReference type="GO" id="GO:0150064">
    <property type="term" value="P:vertebrate eye-specific patterning"/>
    <property type="evidence" value="ECO:0000250"/>
    <property type="project" value="ARUK-UCL"/>
</dbReference>
<dbReference type="CDD" id="cd00017">
    <property type="entry name" value="ANATO"/>
    <property type="match status" value="1"/>
</dbReference>
<dbReference type="CDD" id="cd02896">
    <property type="entry name" value="complement_C3_C4_C5"/>
    <property type="match status" value="1"/>
</dbReference>
<dbReference type="CDD" id="cd03583">
    <property type="entry name" value="NTR_complement_C3"/>
    <property type="match status" value="1"/>
</dbReference>
<dbReference type="FunFam" id="1.20.91.20:FF:000001">
    <property type="entry name" value="Complement C3"/>
    <property type="match status" value="1"/>
</dbReference>
<dbReference type="FunFam" id="1.50.10.20:FF:000008">
    <property type="entry name" value="Complement C3"/>
    <property type="match status" value="1"/>
</dbReference>
<dbReference type="FunFam" id="2.20.130.20:FF:000001">
    <property type="entry name" value="Complement C3"/>
    <property type="match status" value="1"/>
</dbReference>
<dbReference type="FunFam" id="2.40.50.120:FF:000013">
    <property type="entry name" value="Complement C3"/>
    <property type="match status" value="1"/>
</dbReference>
<dbReference type="FunFam" id="2.60.40.10:FF:001013">
    <property type="entry name" value="Complement C3"/>
    <property type="match status" value="1"/>
</dbReference>
<dbReference type="FunFam" id="2.60.40.1930:FF:000006">
    <property type="entry name" value="Complement C3"/>
    <property type="match status" value="1"/>
</dbReference>
<dbReference type="FunFam" id="2.60.40.1930:FF:000008">
    <property type="entry name" value="Complement C3"/>
    <property type="match status" value="1"/>
</dbReference>
<dbReference type="FunFam" id="2.60.40.690:FF:000004">
    <property type="entry name" value="Complement C3"/>
    <property type="match status" value="1"/>
</dbReference>
<dbReference type="FunFam" id="6.20.50.160:FF:000003">
    <property type="entry name" value="Complement C3"/>
    <property type="match status" value="1"/>
</dbReference>
<dbReference type="FunFam" id="2.60.40.10:FF:000155">
    <property type="entry name" value="complement C3 isoform X1"/>
    <property type="match status" value="1"/>
</dbReference>
<dbReference type="FunFam" id="2.60.40.1940:FF:000001">
    <property type="entry name" value="Complement component C3"/>
    <property type="match status" value="1"/>
</dbReference>
<dbReference type="Gene3D" id="1.50.10.20">
    <property type="match status" value="1"/>
</dbReference>
<dbReference type="Gene3D" id="2.20.130.20">
    <property type="match status" value="1"/>
</dbReference>
<dbReference type="Gene3D" id="2.40.50.120">
    <property type="match status" value="1"/>
</dbReference>
<dbReference type="Gene3D" id="2.60.120.1540">
    <property type="match status" value="1"/>
</dbReference>
<dbReference type="Gene3D" id="2.60.40.1930">
    <property type="match status" value="3"/>
</dbReference>
<dbReference type="Gene3D" id="2.60.40.1940">
    <property type="match status" value="1"/>
</dbReference>
<dbReference type="Gene3D" id="6.20.50.160">
    <property type="match status" value="1"/>
</dbReference>
<dbReference type="Gene3D" id="2.60.40.690">
    <property type="entry name" value="Alpha-macroglobulin, receptor-binding domain"/>
    <property type="match status" value="1"/>
</dbReference>
<dbReference type="Gene3D" id="1.20.91.20">
    <property type="entry name" value="Anaphylotoxins (complement system)"/>
    <property type="match status" value="1"/>
</dbReference>
<dbReference type="Gene3D" id="2.60.40.10">
    <property type="entry name" value="Immunoglobulins"/>
    <property type="match status" value="2"/>
</dbReference>
<dbReference type="InterPro" id="IPR009048">
    <property type="entry name" value="A-macroglobulin_rcpt-bd"/>
</dbReference>
<dbReference type="InterPro" id="IPR036595">
    <property type="entry name" value="A-macroglobulin_rcpt-bd_sf"/>
</dbReference>
<dbReference type="InterPro" id="IPR050473">
    <property type="entry name" value="A2M/Complement_sys"/>
</dbReference>
<dbReference type="InterPro" id="IPR011625">
    <property type="entry name" value="A2M_N_BRD"/>
</dbReference>
<dbReference type="InterPro" id="IPR047565">
    <property type="entry name" value="Alpha-macroglob_thiol-ester_cl"/>
</dbReference>
<dbReference type="InterPro" id="IPR011626">
    <property type="entry name" value="Alpha-macroglobulin_TED"/>
</dbReference>
<dbReference type="InterPro" id="IPR000020">
    <property type="entry name" value="Anaphylatoxin/fibulin"/>
</dbReference>
<dbReference type="InterPro" id="IPR018081">
    <property type="entry name" value="Anaphylatoxin_comp_syst"/>
</dbReference>
<dbReference type="InterPro" id="IPR001840">
    <property type="entry name" value="Anaphylatoxn_comp_syst_dom"/>
</dbReference>
<dbReference type="InterPro" id="IPR041425">
    <property type="entry name" value="C3/4/5_MG1"/>
</dbReference>
<dbReference type="InterPro" id="IPR049466">
    <property type="entry name" value="C3_CUB1"/>
</dbReference>
<dbReference type="InterPro" id="IPR048848">
    <property type="entry name" value="C3_CUB2"/>
</dbReference>
<dbReference type="InterPro" id="IPR013783">
    <property type="entry name" value="Ig-like_fold"/>
</dbReference>
<dbReference type="InterPro" id="IPR001599">
    <property type="entry name" value="Macroglobln_a2"/>
</dbReference>
<dbReference type="InterPro" id="IPR019742">
    <property type="entry name" value="MacrogloblnA2_CS"/>
</dbReference>
<dbReference type="InterPro" id="IPR002890">
    <property type="entry name" value="MG2"/>
</dbReference>
<dbReference type="InterPro" id="IPR041555">
    <property type="entry name" value="MG3"/>
</dbReference>
<dbReference type="InterPro" id="IPR040839">
    <property type="entry name" value="MG4"/>
</dbReference>
<dbReference type="InterPro" id="IPR001134">
    <property type="entry name" value="Netrin_domain"/>
</dbReference>
<dbReference type="InterPro" id="IPR018933">
    <property type="entry name" value="Netrin_module_non-TIMP"/>
</dbReference>
<dbReference type="InterPro" id="IPR035815">
    <property type="entry name" value="NTR_complement_C3"/>
</dbReference>
<dbReference type="InterPro" id="IPR008930">
    <property type="entry name" value="Terpenoid_cyclase/PrenylTrfase"/>
</dbReference>
<dbReference type="InterPro" id="IPR008993">
    <property type="entry name" value="TIMP-like_OB-fold"/>
</dbReference>
<dbReference type="PANTHER" id="PTHR11412:SF81">
    <property type="entry name" value="COMPLEMENT C3"/>
    <property type="match status" value="1"/>
</dbReference>
<dbReference type="PANTHER" id="PTHR11412">
    <property type="entry name" value="MACROGLOBULIN / COMPLEMENT"/>
    <property type="match status" value="1"/>
</dbReference>
<dbReference type="Pfam" id="PF00207">
    <property type="entry name" value="A2M"/>
    <property type="match status" value="1"/>
</dbReference>
<dbReference type="Pfam" id="PF07703">
    <property type="entry name" value="A2M_BRD"/>
    <property type="match status" value="1"/>
</dbReference>
<dbReference type="Pfam" id="PF07677">
    <property type="entry name" value="A2M_recep"/>
    <property type="match status" value="1"/>
</dbReference>
<dbReference type="Pfam" id="PF01821">
    <property type="entry name" value="ANATO"/>
    <property type="match status" value="1"/>
</dbReference>
<dbReference type="Pfam" id="PF21406">
    <property type="entry name" value="C3_CUB1"/>
    <property type="match status" value="1"/>
</dbReference>
<dbReference type="Pfam" id="PF21308">
    <property type="entry name" value="C3_CUB2"/>
    <property type="match status" value="1"/>
</dbReference>
<dbReference type="Pfam" id="PF17790">
    <property type="entry name" value="MG1"/>
    <property type="match status" value="1"/>
</dbReference>
<dbReference type="Pfam" id="PF01835">
    <property type="entry name" value="MG2"/>
    <property type="match status" value="1"/>
</dbReference>
<dbReference type="Pfam" id="PF17791">
    <property type="entry name" value="MG3"/>
    <property type="match status" value="1"/>
</dbReference>
<dbReference type="Pfam" id="PF17789">
    <property type="entry name" value="MG4"/>
    <property type="match status" value="1"/>
</dbReference>
<dbReference type="Pfam" id="PF01759">
    <property type="entry name" value="NTR"/>
    <property type="match status" value="1"/>
</dbReference>
<dbReference type="Pfam" id="PF07678">
    <property type="entry name" value="TED_complement"/>
    <property type="match status" value="1"/>
</dbReference>
<dbReference type="PRINTS" id="PR00004">
    <property type="entry name" value="ANAPHYLATOXN"/>
</dbReference>
<dbReference type="SFLD" id="SFLDG01179">
    <property type="entry name" value="Complement_C3/C4_Like"/>
    <property type="match status" value="1"/>
</dbReference>
<dbReference type="SMART" id="SM01360">
    <property type="entry name" value="A2M"/>
    <property type="match status" value="1"/>
</dbReference>
<dbReference type="SMART" id="SM01359">
    <property type="entry name" value="A2M_N_2"/>
    <property type="match status" value="1"/>
</dbReference>
<dbReference type="SMART" id="SM01361">
    <property type="entry name" value="A2M_recep"/>
    <property type="match status" value="1"/>
</dbReference>
<dbReference type="SMART" id="SM00104">
    <property type="entry name" value="ANATO"/>
    <property type="match status" value="1"/>
</dbReference>
<dbReference type="SMART" id="SM00643">
    <property type="entry name" value="C345C"/>
    <property type="match status" value="1"/>
</dbReference>
<dbReference type="SMART" id="SM01419">
    <property type="entry name" value="Thiol-ester_cl"/>
    <property type="match status" value="1"/>
</dbReference>
<dbReference type="SUPFAM" id="SSF49410">
    <property type="entry name" value="Alpha-macroglobulin receptor domain"/>
    <property type="match status" value="1"/>
</dbReference>
<dbReference type="SUPFAM" id="SSF47686">
    <property type="entry name" value="Anaphylotoxins (complement system)"/>
    <property type="match status" value="1"/>
</dbReference>
<dbReference type="SUPFAM" id="SSF48239">
    <property type="entry name" value="Terpenoid cyclases/Protein prenyltransferases"/>
    <property type="match status" value="1"/>
</dbReference>
<dbReference type="SUPFAM" id="SSF50242">
    <property type="entry name" value="TIMP-like"/>
    <property type="match status" value="1"/>
</dbReference>
<dbReference type="PROSITE" id="PS00477">
    <property type="entry name" value="ALPHA_2_MACROGLOBULIN"/>
    <property type="match status" value="1"/>
</dbReference>
<dbReference type="PROSITE" id="PS01177">
    <property type="entry name" value="ANAPHYLATOXIN_1"/>
    <property type="match status" value="1"/>
</dbReference>
<dbReference type="PROSITE" id="PS01178">
    <property type="entry name" value="ANAPHYLATOXIN_2"/>
    <property type="match status" value="1"/>
</dbReference>
<dbReference type="PROSITE" id="PS50189">
    <property type="entry name" value="NTR"/>
    <property type="match status" value="1"/>
</dbReference>
<name>CO3_HUMAN</name>
<reference key="1">
    <citation type="journal article" date="1985" name="Proc. Natl. Acad. Sci. U.S.A.">
        <title>Human complement component C3: cDNA coding sequence and derived primary structure.</title>
        <authorList>
            <person name="de Bruijn M.H.L."/>
            <person name="Fey G.H."/>
        </authorList>
    </citation>
    <scope>NUCLEOTIDE SEQUENCE [MRNA]</scope>
    <scope>VARIANT LEU-314</scope>
</reference>
<reference key="2">
    <citation type="submission" date="2003-12" db="EMBL/GenBank/DDBJ databases">
        <authorList>
            <consortium name="SeattleSNPs variation discovery resource"/>
        </authorList>
    </citation>
    <scope>NUCLEOTIDE SEQUENCE [GENOMIC DNA]</scope>
    <scope>VARIANTS GLY-102; LEU-314; LYS-863; ASP-1224 AND THR-1367</scope>
</reference>
<reference key="3">
    <citation type="submission" date="2005-09" db="EMBL/GenBank/DDBJ databases">
        <authorList>
            <person name="Mural R.J."/>
            <person name="Istrail S."/>
            <person name="Sutton G.G."/>
            <person name="Florea L."/>
            <person name="Halpern A.L."/>
            <person name="Mobarry C.M."/>
            <person name="Lippert R."/>
            <person name="Walenz B."/>
            <person name="Shatkay H."/>
            <person name="Dew I."/>
            <person name="Miller J.R."/>
            <person name="Flanigan M.J."/>
            <person name="Edwards N.J."/>
            <person name="Bolanos R."/>
            <person name="Fasulo D."/>
            <person name="Halldorsson B.V."/>
            <person name="Hannenhalli S."/>
            <person name="Turner R."/>
            <person name="Yooseph S."/>
            <person name="Lu F."/>
            <person name="Nusskern D.R."/>
            <person name="Shue B.C."/>
            <person name="Zheng X.H."/>
            <person name="Zhong F."/>
            <person name="Delcher A.L."/>
            <person name="Huson D.H."/>
            <person name="Kravitz S.A."/>
            <person name="Mouchard L."/>
            <person name="Reinert K."/>
            <person name="Remington K.A."/>
            <person name="Clark A.G."/>
            <person name="Waterman M.S."/>
            <person name="Eichler E.E."/>
            <person name="Adams M.D."/>
            <person name="Hunkapiller M.W."/>
            <person name="Myers E.W."/>
            <person name="Venter J.C."/>
        </authorList>
    </citation>
    <scope>NUCLEOTIDE SEQUENCE [LARGE SCALE GENOMIC DNA]</scope>
</reference>
<reference key="4">
    <citation type="journal article" date="2004" name="Genome Res.">
        <title>The status, quality, and expansion of the NIH full-length cDNA project: the Mammalian Gene Collection (MGC).</title>
        <authorList>
            <consortium name="The MGC Project Team"/>
        </authorList>
    </citation>
    <scope>NUCLEOTIDE SEQUENCE [LARGE SCALE MRNA]</scope>
</reference>
<reference key="5">
    <citation type="journal article" date="1993" name="J. Clin. Invest.">
        <title>The adipsin-acylation stimulating protein system and regulation of intracellular triglyceride synthesis.</title>
        <authorList>
            <person name="Baldo A."/>
            <person name="Sniderman A.D."/>
            <person name="St-Luce S."/>
            <person name="Avramoglu R.K."/>
            <person name="Maslowska M."/>
            <person name="Hoang B."/>
            <person name="Monge J.C."/>
            <person name="Bell A."/>
            <person name="Mulay S."/>
            <person name="Cianflone K."/>
        </authorList>
    </citation>
    <scope>PROTEIN SEQUENCE OF N-TERMINUS</scope>
    <scope>IDENTIFICATION BY MASS SPECTROMETRY</scope>
    <scope>FUNCTION</scope>
</reference>
<reference key="6">
    <citation type="journal article" date="1975" name="J. Biol. Chem.">
        <title>Human anaphylatoxin (C3a) from the third component of complement. Primary structure.</title>
        <authorList>
            <person name="Hugli T.E."/>
        </authorList>
    </citation>
    <scope>PROTEIN SEQUENCE OF 672-748</scope>
    <scope>SUBCELLULAR LOCATION (C3A ANAPHYLATOXIN)</scope>
</reference>
<reference key="7">
    <citation type="journal article" date="2014" name="Proc. Natl. Acad. Sci. U.S.A.">
        <title>Neisseria meningitidis NalP cleaves human complement C3, facilitating degradation of C3b and survival in human serum.</title>
        <authorList>
            <person name="Del Tordello E."/>
            <person name="Vacca I."/>
            <person name="Ram S."/>
            <person name="Rappuoli R."/>
            <person name="Serruto D."/>
        </authorList>
    </citation>
    <scope>PROTEIN SEQUENCE OF 745-754</scope>
    <scope>CLEAVAGE BY N.MENINGITIDIS NALP (MICROBIAL INFECTION)</scope>
</reference>
<reference key="8">
    <citation type="journal article" date="1995" name="J. Biol. Chem.">
        <title>Identification of angiotensinogen and complement C3dg as novel proteins binding the proform of eosinophil major basic protein in human pregnancy serum and plasma.</title>
        <authorList>
            <person name="Oxvig C."/>
            <person name="Haaning J."/>
            <person name="Kristensen L."/>
            <person name="Wagner J.M."/>
            <person name="Rubin I."/>
            <person name="Stigbrand T."/>
            <person name="Gleich G.J."/>
            <person name="Sottrup-Jensen L."/>
        </authorList>
    </citation>
    <scope>PROTEIN SEQUENCE OF 955-966</scope>
    <scope>SUBUNIT</scope>
    <scope>PROTEOLYTIC CLEAVAGE</scope>
    <source>
        <tissue>Serum</tissue>
    </source>
</reference>
<reference key="9">
    <citation type="journal article" date="1982" name="Proc. Natl. Acad. Sci. U.S.A.">
        <title>Third component of human complement: localization of the internal thiolester bond.</title>
        <authorList>
            <person name="Thomas M.L."/>
            <person name="Janatova J."/>
            <person name="Gray W.R."/>
            <person name="Tack B.F."/>
        </authorList>
    </citation>
    <scope>PROTEIN SEQUENCE OF 988-1036</scope>
    <scope>THIOESTER LINKAGE</scope>
</reference>
<reference key="10">
    <citation type="journal article" date="1970" name="J. Clin. Invest.">
        <title>Anaphylatoxin inactivator of human plasma: its isolation and characterization as a carboxypeptidase.</title>
        <authorList>
            <person name="Bokisch V.A."/>
            <person name="Mueller-Eberhard H.J."/>
        </authorList>
    </citation>
    <scope>PROTEOLYTIC CLEAVAGE (C3A ANAPHYLATOXIN)</scope>
</reference>
<reference key="11">
    <citation type="journal article" date="1977" name="J. Exp. Med.">
        <title>The role of membrane receptors for C3b and C3d in phagocytosis.</title>
        <authorList>
            <person name="Ehlenberger A.G."/>
            <person name="Nussenzweig V."/>
        </authorList>
    </citation>
    <scope>FUNCTION (COMPLEMENT C3B)</scope>
    <scope>SUBCELLULAR LOCATION (COMPLEMENT C3B)</scope>
</reference>
<reference key="12">
    <citation type="journal article" date="1978" name="Immunology">
        <title>A new function of the activated third component of complement: binding to C5, an essential step for C5 activation.</title>
        <authorList>
            <person name="Vogt W."/>
            <person name="Schmidt G."/>
            <person name="Von Buttlar B."/>
            <person name="Dieminger L."/>
        </authorList>
    </citation>
    <scope>FUNCTION</scope>
    <scope>SUBUNIT (COMPLEMENT C3B)</scope>
</reference>
<reference key="13">
    <citation type="journal article" date="1980" name="J. Biol. Chem.">
        <title>The active site of C3a anaphylatoxin.</title>
        <authorList>
            <person name="Caporale L.H."/>
            <person name="Tippett P.S."/>
            <person name="Erickson B.W."/>
            <person name="Hugli T.E."/>
        </authorList>
    </citation>
    <scope>FUNCTION (C3A ANAPHYLATOXIN)</scope>
    <scope>PROTEOLYTIC CLEAVAGE (C3A ANAPHYLATOXIN)</scope>
</reference>
<reference key="14">
    <citation type="journal article" date="1980" name="Biochem. J.">
        <title>The human complement system: assembly of the classical pathway C3 convertase.</title>
        <authorList>
            <person name="Kerr M.A."/>
        </authorList>
    </citation>
    <scope>PROTEOLYTIC CLEAVAGE</scope>
</reference>
<reference key="15">
    <citation type="journal article" date="1980" name="J. Exp. Med.">
        <title>Relation of putative thioester bond in C3 to activation of the alternative pathway and the binding of C3b to biological targets of complement.</title>
        <authorList>
            <person name="Pangburn M.K."/>
            <person name="Mueller-Eberhard H.J."/>
        </authorList>
    </citation>
    <scope>FUNCTION (COMPLEMENT C3B)</scope>
    <scope>SUBCELLULAR LOCATION (COMPLEMENT C3B)</scope>
</reference>
<reference key="16">
    <citation type="journal article" date="1980" name="Mol. Immunol.">
        <title>The physiological breakdown of the third component of human complement.</title>
        <authorList>
            <person name="Harrison R.A."/>
            <person name="Lachmann P.J."/>
        </authorList>
    </citation>
    <scope>PROTEOLYTIC CLEAVAGE (COMPLEMENT C3B)</scope>
</reference>
<reference key="17">
    <citation type="journal article" date="1981" name="J. Biochem.">
        <title>Limited proteolysis of the third component of human complement, C3, by heat treatment.</title>
        <authorList>
            <person name="Seya T."/>
            <person name="Nagasawa S."/>
        </authorList>
    </citation>
    <scope>SUBUNIT</scope>
    <scope>PROTEOLYTIC CLEAVAGE</scope>
</reference>
<reference key="18">
    <citation type="journal article" date="1983" name="J. Biol. Chem.">
        <title>The activation of human complement component C5 by a fluid phase C5 convertase.</title>
        <authorList>
            <person name="DiScipio R.G."/>
            <person name="Smith C.A."/>
            <person name="Muller-Eberhard H.J."/>
            <person name="Hugli T.E."/>
        </authorList>
    </citation>
    <scope>FUNCTION</scope>
    <scope>SUBUNIT (COMPLEMENT C3B)</scope>
</reference>
<reference key="19">
    <citation type="journal article" date="1984" name="Biochem. J.">
        <title>The effects of iodine and thiol-blocking reagents on complement component C2 and on the assembly of the classical-pathway C3 convertase.</title>
        <authorList>
            <person name="Kerr M.A."/>
            <person name="Parkes C."/>
        </authorList>
    </citation>
    <scope>PROTEOLYTIC CLEAVAGE</scope>
</reference>
<reference key="20">
    <citation type="journal article" date="1985" name="J. Exp. Med.">
        <title>IgG bearing covalently bound C3b has enhanced bactericidal activity for Escherichia coli 0111.</title>
        <authorList>
            <person name="Joiner K.A."/>
            <person name="Fries L.F."/>
            <person name="Schmetz M.A."/>
            <person name="Frank M.M."/>
        </authorList>
    </citation>
    <scope>FUNCTION (COMPLEMENT C3B)</scope>
    <scope>SUBCELLULAR LOCATION (COMPLEMENT C3B)</scope>
</reference>
<reference key="21">
    <citation type="journal article" date="1987" name="Immunology">
        <title>Phagocytosis of target particles bearing C3b-IgG covalent complexes by human monocytes and polymorphonuclear leucocytes.</title>
        <authorList>
            <person name="Fries L.F."/>
            <person name="Siwik S.A."/>
            <person name="Malbran A."/>
            <person name="Frank M.M."/>
        </authorList>
    </citation>
    <scope>FUNCTION (COMPLEMENT C3B)</scope>
    <scope>SUBCELLULAR LOCATION (COMPLEMENT C3B)</scope>
</reference>
<reference key="22">
    <citation type="journal article" date="1988" name="J. Exp. Med.">
        <title>Identification of distinct C3b and C4b recognition sites in the human C3b/C4b receptor (CR1, CD35) by deletion mutagenesis.</title>
        <authorList>
            <person name="Klickstein L.B."/>
            <person name="Bartow T.J."/>
            <person name="Miletic V."/>
            <person name="Rabson L.D."/>
            <person name="Smith J.A."/>
            <person name="Fearon D.T."/>
        </authorList>
    </citation>
    <scope>INTERACTION WITH CR1 (COMPLEMENT C3B)</scope>
</reference>
<reference key="23">
    <citation type="journal article" date="1988" name="J. Immunol.">
        <title>A 34-amino acid peptide of the third component of complement mediates properdin binding.</title>
        <authorList>
            <person name="Daoudaki M.E."/>
            <person name="Becherer J.D."/>
            <person name="Lambris J.D."/>
        </authorList>
    </citation>
    <scope>PROTEIN SEQUENCE OF 1409-1563</scope>
</reference>
<reference key="24">
    <citation type="journal article" date="1982" name="J. Biol. Chem.">
        <title>The cobra venom factor-dependent C3 convertase of human complement. A kinetic and thermodynamic analysis of a protease acting on its natural high molecular weight substrate.</title>
        <authorList>
            <person name="Vogel C.W."/>
            <person name="Mueller-Eberhard H.J."/>
        </authorList>
    </citation>
    <scope>PROTEOLYTIC CLEAVAGE</scope>
    <scope>SUBUNIT (COMPLEMENT C3B)</scope>
</reference>
<reference key="25">
    <citation type="journal article" date="1986" name="Biochem. J.">
        <title>The C3 convertase of the alternative pathway of human complement. Enzymic properties of the bimolecular proteinase.</title>
        <authorList>
            <person name="Pangburn M.K."/>
            <person name="Mueller-Eberhard H.J."/>
        </authorList>
    </citation>
    <scope>PROTEOLYTIC CLEAVAGE</scope>
    <scope>SUBUNIT (COMPLEMENT C3B)</scope>
</reference>
<reference key="26">
    <citation type="journal article" date="1987" name="Microb. Pathog.">
        <title>Complement component C3b binds directly to purified glycoprotein C of herpes simplex virus types 1 and 2.</title>
        <authorList>
            <person name="Eisenberg R.J."/>
            <person name="Ponce de Leon M."/>
            <person name="Friedman H.M."/>
            <person name="Fries L.F."/>
            <person name="Frank M.M."/>
            <person name="Hastings J.C."/>
            <person name="Cohen G.H."/>
        </authorList>
    </citation>
    <scope>INTERACTION WITH HERPES SIMPLEX VIRUS HHV-1 AND HHV-2 GLYCOPROTEIN C (MICROBIAL INFECTION)</scope>
</reference>
<reference key="27">
    <citation type="journal article" date="1989" name="J. Biol. Chem.">
        <title>Purification and characterization of acylation stimulating protein.</title>
        <authorList>
            <person name="Cianflone K.M."/>
            <person name="Sniderman A.D."/>
            <person name="Walsh M.J."/>
            <person name="Vu H.T."/>
            <person name="Gagnon J."/>
            <person name="Rodriguez M.A."/>
        </authorList>
    </citation>
    <scope>FUNCTION</scope>
</reference>
<reference key="28">
    <citation type="journal article" date="1990" name="J. Biol. Chem.">
        <title>Localization of the covalent C3b-binding site on C4b within the complement classical pathway C5 convertase, C4b2a3b.</title>
        <authorList>
            <person name="Kozono H."/>
            <person name="Kinoshita T."/>
            <person name="Kim Y.U."/>
            <person name="Takata-Kozono Y."/>
            <person name="Tsunasawa S."/>
            <person name="Sakiyama F."/>
            <person name="Takeda J."/>
            <person name="Hong K."/>
            <person name="Inoue K."/>
        </authorList>
    </citation>
    <scope>FUNCTION (COMPLEMENT C3B)</scope>
    <scope>SUBUNIT (COMPLEMENT C3B)</scope>
    <scope>PTM (COMPLEMENT C3B)</scope>
</reference>
<reference key="29">
    <citation type="journal article" date="1992" name="J. Biol. Chem.">
        <title>Covalent binding of C3b to C4b within the classical complement pathway C5 convertase. Determination of amino acid residues involved in ester linkage formation.</title>
        <authorList>
            <person name="Kim Y.U."/>
            <person name="Carroll M.C."/>
            <person name="Isenman D.E."/>
            <person name="Nonaka M."/>
            <person name="Pramoonjago P."/>
            <person name="Takeda J."/>
            <person name="Inoue K."/>
            <person name="Kinoshita T."/>
        </authorList>
    </citation>
    <scope>SUBUNIT (COMPLEMENT C3B)</scope>
    <scope>PTM (COMPLEMENT C3B)</scope>
</reference>
<reference key="30">
    <citation type="journal article" date="1992" name="J. Biol. Chem.">
        <title>Structural requirements for thioester bond formation in human complement component C3. Reassessment of the role of thioester bond integrity on the conformation of C3.</title>
        <authorList>
            <person name="Isaac L."/>
            <person name="Isenman D.E."/>
        </authorList>
    </citation>
    <scope>MUTAGENESIS OF THE THIOESTER BOND REGION</scope>
</reference>
<reference key="31">
    <citation type="journal article" date="1993" name="FEBS Lett.">
        <title>Disulfide bridges in human complement component C3b.</title>
        <authorList>
            <person name="Dolmer K."/>
            <person name="Sottrup-Jensen L."/>
        </authorList>
    </citation>
    <scope>DISULFIDE BONDS</scope>
</reference>
<reference key="32">
    <citation type="journal article" date="1993" name="J. Biol. Chem.">
        <title>Preferential formation of C3b-IgG complexes in vitro and in vivo from nascent C3b and naturally occurring anti-band 3 antibodies.</title>
        <authorList>
            <person name="Lutz H.U."/>
            <person name="Stammler P."/>
            <person name="Fasler S."/>
        </authorList>
    </citation>
    <scope>FUNCTION (COMPLEMENT C3B)</scope>
    <scope>SUBCELLULAR LOCATION (COMPLEMENT C3B)</scope>
</reference>
<reference key="33">
    <citation type="journal article" date="1994" name="J. Biol. Chem.">
        <title>Analysis of the functional domains of complement receptor type 1 (C3b/C4b receptor; CD35) by substitution mutagenesis.</title>
        <authorList>
            <person name="Krych M."/>
            <person name="Clemenza L."/>
            <person name="Howdeshell D."/>
            <person name="Hauhart R."/>
            <person name="Hourcade D."/>
            <person name="Atkinson J.P."/>
        </authorList>
    </citation>
    <scope>INTERACTION WITH CR1 (COMPLEMENT C3B)</scope>
</reference>
<reference key="34">
    <citation type="journal article" date="1996" name="J. Biol. Chem.">
        <title>Molecular cloning and characterization of the human anaphylatoxin C3a receptor.</title>
        <authorList>
            <person name="Ames R.S."/>
            <person name="Li Y."/>
            <person name="Sarau H.M."/>
            <person name="Nuthulaganti P."/>
            <person name="Foley J.J."/>
            <person name="Ellis C."/>
            <person name="Zeng Z."/>
            <person name="Su K."/>
            <person name="Jurewicz A.J."/>
            <person name="Hertzberg R.P."/>
            <person name="Bergsma D.J."/>
            <person name="Kumar C."/>
        </authorList>
    </citation>
    <scope>FUNCTION (C3A ANAPHYLATOXIN)</scope>
</reference>
<reference key="35">
    <citation type="journal article" date="1997" name="Biochim. Biophys. Acta">
        <title>Acylation-stimulating protein (ASP) regulates glucose transport in the rat L6 muscle cell line.</title>
        <authorList>
            <person name="Tao Y."/>
            <person name="Cianflone K."/>
            <person name="Sniderman A.D."/>
            <person name="Colby-Germinario S.P."/>
            <person name="Germinario R.J."/>
        </authorList>
    </citation>
    <scope>FUNCTION</scope>
</reference>
<reference key="36">
    <citation type="journal article" date="1998" name="J. Biol. Chem.">
        <title>A conserved element in the serine protease domain of complement factor B.</title>
        <authorList>
            <person name="Hourcade D.E."/>
            <person name="Mitchell L.M."/>
            <person name="Oglesby T.J."/>
        </authorList>
    </citation>
    <scope>PROTEOLYTIC CLEAVAGE</scope>
    <scope>SUBUNIT (COMPLEMENT C3B)</scope>
</reference>
<reference key="37">
    <citation type="journal article" date="1998" name="J. Lipid Res.">
        <title>Coordinated release of acylation stimulating protein (ASP) and triacylglycerol clearance by human adipose tissue in vivo in the postprandial period.</title>
        <authorList>
            <person name="Saleh J."/>
            <person name="Summers L.K."/>
            <person name="Cianflone K."/>
            <person name="Fielding B.A."/>
            <person name="Sniderman A.D."/>
            <person name="Frayn K.N."/>
        </authorList>
    </citation>
    <scope>IDENTIFICATION BY MASS SPECTROMETRY</scope>
    <scope>TISSUE SPECIFICITY</scope>
    <scope>FUNCTION</scope>
</reference>
<reference key="38">
    <citation type="journal article" date="1999" name="Biochem. J.">
        <title>Acylation-stimulating protein (ASP): structure-function determinants of cell surface binding and triacylglycerol synthetic activity.</title>
        <authorList>
            <person name="Murray I."/>
            <person name="Kohl J."/>
            <person name="Cianflone K."/>
        </authorList>
    </citation>
    <scope>FUNCTION</scope>
</reference>
<reference key="39">
    <citation type="journal article" date="2002" name="J. Biol. Chem.">
        <title>The orphan receptor C5L2 has high affinity binding sites for complement fragments C5a and C5a des Arg(74).</title>
        <authorList>
            <person name="Cain S.A."/>
            <person name="Monk P.N."/>
        </authorList>
    </citation>
    <scope>FUNCTION (C3A ANAPHYLATOXIN)</scope>
    <scope>FUNCTION (ACYLATION STIMULATING PROTEIN)</scope>
</reference>
<reference key="40">
    <citation type="journal article" date="2003" name="J. Biol. Chem.">
        <title>The chemoattractant receptor-like protein C5L2 binds the C3a des-Arg77/acylation-stimulating protein.</title>
        <authorList>
            <person name="Kalant D."/>
            <person name="Cain S.A."/>
            <person name="Maslowska M."/>
            <person name="Sniderman A.D."/>
            <person name="Cianflone K."/>
            <person name="Monk P.N."/>
        </authorList>
    </citation>
    <scope>FUNCTION (C3A ANAPHYLATOXIN)</scope>
    <scope>FUNCTION (ACYLATION STIMULATING PROTEIN)</scope>
</reference>
<reference key="41">
    <citation type="journal article" date="2003" name="J. Biol. Chem.">
        <title>Formation of high affinity C5 convertase of the classical pathway of complement.</title>
        <authorList>
            <person name="Rawal N."/>
            <person name="Pangburn M.K."/>
        </authorList>
    </citation>
    <scope>FUNCTION (COMPLEMENT C3B)</scope>
    <scope>SUBUNIT (COMPLEMENT C3B)</scope>
</reference>
<reference key="42">
    <citation type="journal article" date="2003" name="Nat. Biotechnol.">
        <title>Identification and quantification of N-linked glycoproteins using hydrazide chemistry, stable isotope labeling and mass spectrometry.</title>
        <authorList>
            <person name="Zhang H."/>
            <person name="Li X.-J."/>
            <person name="Martin D.B."/>
            <person name="Aebersold R."/>
        </authorList>
    </citation>
    <scope>GLYCOSYLATION AT ASN-85</scope>
</reference>
<reference key="43">
    <citation type="journal article" date="2004" name="Proteomics">
        <title>Screening for N-glycosylated proteins by liquid chromatography mass spectrometry.</title>
        <authorList>
            <person name="Bunkenborg J."/>
            <person name="Pilch B.J."/>
            <person name="Podtelejnikov A.V."/>
            <person name="Wisniewski J.R."/>
        </authorList>
    </citation>
    <scope>GLYCOSYLATION [LARGE SCALE ANALYSIS] AT ASN-939</scope>
    <source>
        <tissue>Plasma</tissue>
    </source>
</reference>
<reference key="44">
    <citation type="journal article" date="2005" name="Int. J. Obes. Relat. Metab. Disord.">
        <title>Acylation-stimulating protein: effect of acute exercise and endurance training.</title>
        <authorList>
            <person name="Schrauwen P."/>
            <person name="Hesselink M.K."/>
            <person name="Jain M."/>
            <person name="Cianflone K."/>
        </authorList>
    </citation>
    <scope>EFFECTS OF EXERCISE</scope>
</reference>
<reference key="45">
    <citation type="journal article" date="2005" name="J. Biol. Chem.">
        <title>C5L2 is a functional receptor for acylation-stimulating protein.</title>
        <authorList>
            <person name="Kalant D."/>
            <person name="MacLaren R."/>
            <person name="Cui W."/>
            <person name="Samanta R."/>
            <person name="Monk P.N."/>
            <person name="Laporte S.A."/>
            <person name="Cianflone K."/>
        </authorList>
    </citation>
    <scope>FUNCTION</scope>
    <scope>TISSUE SPECIFICITY</scope>
</reference>
<reference key="46">
    <citation type="journal article" date="2005" name="J. Proteome Res.">
        <title>Human plasma N-glycoproteome analysis by immunoaffinity subtraction, hydrazide chemistry, and mass spectrometry.</title>
        <authorList>
            <person name="Liu T."/>
            <person name="Qian W.-J."/>
            <person name="Gritsenko M.A."/>
            <person name="Camp D.G. II"/>
            <person name="Monroe M.E."/>
            <person name="Moore R.J."/>
            <person name="Smith R.D."/>
        </authorList>
    </citation>
    <scope>GLYCOSYLATION [LARGE SCALE ANALYSIS] AT ASN-85; ASN-939 AND ASN-1617</scope>
    <source>
        <tissue>Plasma</tissue>
    </source>
</reference>
<reference key="47">
    <citation type="journal article" date="2006" name="Int. J. Obes. Relat. Metab. Disord.">
        <title>Relationships among acylation stimulating protein, adiponectin and complement C3 in lean vs obese type 2 diabetes.</title>
        <authorList>
            <person name="Yang Y."/>
            <person name="Lu H.L."/>
            <person name="Zhang J."/>
            <person name="Yu H.Y."/>
            <person name="Wang H.W."/>
            <person name="Zhang M.X."/>
            <person name="Cianflone K."/>
        </authorList>
    </citation>
    <scope>ASSOCIATION WITH TYPE 2 DIABETES</scope>
</reference>
<reference key="48">
    <citation type="journal article" date="2006" name="J. Lipid Res.">
        <title>Targeting the signaling pathway of acylation stimulating protein.</title>
        <authorList>
            <person name="Maslowska M."/>
            <person name="Legakis H."/>
            <person name="Assadi F."/>
            <person name="Cianflone K."/>
        </authorList>
    </citation>
    <scope>IDENTIFICATION BY MASS SPECTROMETRY</scope>
    <scope>FUNCTION</scope>
</reference>
<reference key="49">
    <citation type="journal article" date="2006" name="Mol. Cell. Proteomics">
        <title>Elucidation of N-glycosylation sites on human platelet proteins: a glycoproteomic approach.</title>
        <authorList>
            <person name="Lewandrowski U."/>
            <person name="Moebius J."/>
            <person name="Walter U."/>
            <person name="Sickmann A."/>
        </authorList>
    </citation>
    <scope>GLYCOSYLATION [LARGE SCALE ANALYSIS] AT ASN-85</scope>
    <source>
        <tissue>Platelet</tissue>
    </source>
</reference>
<reference key="50">
    <citation type="journal article" date="2007" name="Mol. Immunol.">
        <title>Human keratinocytes produce the complement inhibitor factor I: Synthesis is regulated by interferon-gamma.</title>
        <authorList>
            <person name="Timar K.K."/>
            <person name="Junnikkala S."/>
            <person name="Dallos A."/>
            <person name="Jarva H."/>
            <person name="Bhuiyan Z.A."/>
            <person name="Meri S."/>
            <person name="Bos J.D."/>
            <person name="Asghar S.S."/>
        </authorList>
    </citation>
    <scope>PROTEOLYTIC CLEAVAGE (COMPLEMENT C3B)</scope>
</reference>
<reference key="51">
    <citation type="journal article" date="2008" name="Eur. J. Endocrinol.">
        <title>Acylation stimulating protein but not complement C3 associates with metabolic syndrome components in Chinese children and adolescents.</title>
        <authorList>
            <person name="Wamba P.C."/>
            <person name="Mi J."/>
            <person name="Zhao X.Y."/>
            <person name="Zhang M.X."/>
            <person name="Wen Y."/>
            <person name="Cheng H."/>
            <person name="Hou D.Q."/>
            <person name="Cianflone K."/>
        </authorList>
    </citation>
    <scope>ASSOCIATION WITH OBESITY</scope>
</reference>
<reference key="52">
    <citation type="journal article" date="2008" name="J. Biol. Chem.">
        <title>Group A streptococcal cysteine protease degrades C3 (C3b) and contributes to evasion of innate immunity.</title>
        <authorList>
            <person name="Terao Y."/>
            <person name="Mori Y."/>
            <person name="Yamaguchi M."/>
            <person name="Shimizu Y."/>
            <person name="Ooe K."/>
            <person name="Hamada S."/>
            <person name="Kawabata S."/>
        </authorList>
    </citation>
    <scope>PROTEOLYTIC CLEAVAGE (MICROBIAL INFECTION)</scope>
</reference>
<reference key="53">
    <citation type="journal article" date="2008" name="J. Biol. Chem.">
        <title>Activation of complement component C5: comparison of C5 convertases of the lectin pathway and the classical pathway of complement.</title>
        <authorList>
            <person name="Rawal N."/>
            <person name="Rajagopalan R."/>
            <person name="Salvi V.P."/>
        </authorList>
    </citation>
    <scope>FUNCTION (COMPLEMENT C3B)</scope>
    <scope>SUBUNIT (COMPLEMENT C3B)</scope>
</reference>
<reference key="54">
    <citation type="journal article" date="2008" name="PLoS Pathog.">
        <title>The Staphylococcus aureus protein Sbi acts as a complement inhibitor and forms a tripartite complex with host complement Factor H and C3b.</title>
        <authorList>
            <person name="Haupt K."/>
            <person name="Reuter M."/>
            <person name="van den Elsen J."/>
            <person name="Burman J."/>
            <person name="Haelbich S."/>
            <person name="Richter J."/>
            <person name="Skerka C."/>
            <person name="Zipfel P.F."/>
        </authorList>
    </citation>
    <scope>INTERACTION WITH STAPHYLOCOCCUS AUREUS PROTEIN SBI (MICROBIAL INFECTION)</scope>
</reference>
<reference key="55">
    <citation type="journal article" date="2009" name="J. Proteome Res.">
        <title>Glycoproteomics analysis of human liver tissue by combination of multiple enzyme digestion and hydrazide chemistry.</title>
        <authorList>
            <person name="Chen R."/>
            <person name="Jiang X."/>
            <person name="Sun D."/>
            <person name="Han G."/>
            <person name="Wang F."/>
            <person name="Ye M."/>
            <person name="Wang L."/>
            <person name="Zou H."/>
        </authorList>
    </citation>
    <scope>GLYCOSYLATION [LARGE SCALE ANALYSIS] AT ASN-85</scope>
    <source>
        <tissue>Liver</tissue>
    </source>
</reference>
<reference key="56">
    <citation type="journal article" date="2009" name="Mol. Immunol.">
        <title>C5a- and ASP-mediated C5L2 activation, endocytosis and recycling are lost in S323I-C5L2 mutation.</title>
        <authorList>
            <person name="Cui W."/>
            <person name="Simaan M."/>
            <person name="Laporte S."/>
            <person name="Lodge R."/>
            <person name="Cianflone K."/>
        </authorList>
    </citation>
    <scope>FUNCTION</scope>
</reference>
<reference key="57">
    <citation type="journal article" date="2010" name="J. Immunol.">
        <title>Mutational analyses reveal that the staphylococcal immune evasion molecule Sbi and complement receptor 2 (CR2) share overlapping contact residues on C3d: implications for the controversy regarding the CR2/C3d cocrystal structure.</title>
        <authorList>
            <person name="Isenman D.E."/>
            <person name="Leung E."/>
            <person name="Mackay J.D."/>
            <person name="Bagby S."/>
            <person name="van den Elsen J.M."/>
        </authorList>
    </citation>
    <scope>MUTAGENESIS OF ASP-1029; GLU-1030; GLU-1032; GLU-1035; ARG-1042; ASP-1140; GLU-1153; ASP-1156; GLU-1159; GLU-1160; ASN-1163 AND LYS-1284</scope>
    <scope>INTERACTION WITH CR2 AND S.AUREUS SBI (MICROBIAL INFECTION)</scope>
</reference>
<reference key="58">
    <citation type="journal article" date="2010" name="J. Mol. Biol.">
        <title>Delineation of the complement receptor type 2-C3d complex by site-directed mutagenesis and molecular docking.</title>
        <authorList>
            <person name="Shaw C.D."/>
            <person name="Storek M.J."/>
            <person name="Young K.A."/>
            <person name="Kovacs J.M."/>
            <person name="Thurman J.M."/>
            <person name="Holers V.M."/>
            <person name="Hannan J.P."/>
        </authorList>
    </citation>
    <scope>MUTAGENESIS OF ASP-1029; GLU-1030; GLU-1032; GLU-1110; ASP-1115; ASP-1121; ASP-1140; GLU-1153; ASP-1156; GLU-1159; GLU-1160 AND ASN-1163</scope>
    <scope>INTERACTION WITH CR2 (COMPLEMENT C3D FRAGMENT)</scope>
</reference>
<reference key="59">
    <citation type="journal article" date="2010" name="Metabolism">
        <title>Serum complement C3: a determinant of cardiometabolic risk, additive to the metabolic syndrome, in middle-aged population.</title>
        <authorList>
            <person name="Onat A."/>
            <person name="Hergenc G."/>
            <person name="Can G."/>
            <person name="Kaya Z."/>
            <person name="Yuksel H."/>
        </authorList>
    </citation>
    <scope>ASSOCIATION WITH CORONARY HEART DISEASE</scope>
</reference>
<reference key="60">
    <citation type="journal article" date="2011" name="J. Immunol.">
        <title>Staphylococcus aureus metalloprotease aureolysin cleaves complement C3 to mediate immune evasion.</title>
        <authorList>
            <person name="Laarman A.J."/>
            <person name="Ruyken M."/>
            <person name="Malone C.L."/>
            <person name="van Strijp J.A."/>
            <person name="Horswill A.R."/>
            <person name="Rooijakkers S.H."/>
        </authorList>
    </citation>
    <scope>CLEAVAGE BY STAPHYLOCOCCUS AUREUS PROTEIN AUREOLYSIN (MICROBIAL INFECTION)</scope>
</reference>
<reference key="61">
    <citation type="journal article" date="2011" name="BMC Syst. Biol.">
        <title>Initial characterization of the human central proteome.</title>
        <authorList>
            <person name="Burkard T.R."/>
            <person name="Planyavsky M."/>
            <person name="Kaupe I."/>
            <person name="Breitwieser F.P."/>
            <person name="Buerckstuemmer T."/>
            <person name="Bennett K.L."/>
            <person name="Superti-Furga G."/>
            <person name="Colinge J."/>
        </authorList>
    </citation>
    <scope>IDENTIFICATION BY MASS SPECTROMETRY [LARGE SCALE ANALYSIS]</scope>
</reference>
<reference key="62">
    <citation type="journal article" date="2013" name="Pharmacol. Rev.">
        <title>International Union of Basic and Clinical Pharmacology. [corrected]. LXXXVII. Complement peptide C5a, C4a, and C3a receptors.</title>
        <authorList>
            <person name="Klos A."/>
            <person name="Wende E."/>
            <person name="Wareham K.J."/>
            <person name="Monk P.N."/>
        </authorList>
    </citation>
    <scope>REVIEW (C3A ANAPHYLATOXIN)</scope>
</reference>
<reference key="63">
    <citation type="journal article" date="2014" name="J. Proteomics">
        <title>An enzyme assisted RP-RPLC approach for in-depth analysis of human liver phosphoproteome.</title>
        <authorList>
            <person name="Bian Y."/>
            <person name="Song C."/>
            <person name="Cheng K."/>
            <person name="Dong M."/>
            <person name="Wang F."/>
            <person name="Huang J."/>
            <person name="Sun D."/>
            <person name="Wang L."/>
            <person name="Ye M."/>
            <person name="Zou H."/>
        </authorList>
    </citation>
    <scope>IDENTIFICATION BY MASS SPECTROMETRY [LARGE SCALE ANALYSIS]</scope>
    <source>
        <tissue>Liver</tissue>
    </source>
</reference>
<reference key="64">
    <citation type="journal article" date="2015" name="Cell">
        <title>A single kinase generates the majority of the secreted phosphoproteome.</title>
        <authorList>
            <person name="Tagliabracci V.S."/>
            <person name="Wiley S.E."/>
            <person name="Guo X."/>
            <person name="Kinch L.N."/>
            <person name="Durrant E."/>
            <person name="Wen J."/>
            <person name="Xiao J."/>
            <person name="Cui J."/>
            <person name="Nguyen K.B."/>
            <person name="Engel J.L."/>
            <person name="Coon J.J."/>
            <person name="Grishin N."/>
            <person name="Pinna L.A."/>
            <person name="Pagliarini D.J."/>
            <person name="Dixon J.E."/>
        </authorList>
    </citation>
    <scope>PHOSPHORYLATION AT SER-38; SER-70; SER-297; SER-303; SER-672; SER-968; SER-1321 AND SER-1573</scope>
</reference>
<reference key="65">
    <citation type="journal article" date="2019" name="EMBO J.">
        <title>Bacterial killing by complement requires membrane attack complex formation via surface-bound C5 convertases.</title>
        <authorList>
            <person name="Heesterbeek D.A."/>
            <person name="Bardoel B.W."/>
            <person name="Parsons E.S."/>
            <person name="Bennett I."/>
            <person name="Ruyken M."/>
            <person name="Doorduijn D.J."/>
            <person name="Gorham R.D. Jr."/>
            <person name="Berends E.T."/>
            <person name="Pyne A.L."/>
            <person name="Hoogenboom B.W."/>
            <person name="Rooijakkers S.H."/>
        </authorList>
    </citation>
    <scope>SUBUNIT (COMPLEMENT C3B)</scope>
</reference>
<reference key="66">
    <citation type="journal article" date="2025" name="Nature">
        <title>Granzyme K activates the entire complement cascade.</title>
        <authorList>
            <consortium name="Accelerating Medicines Partnership RA/SLE Network"/>
            <person name="Donado C.A."/>
            <person name="Theisen E."/>
            <person name="Zhang F."/>
            <person name="Nathan A."/>
            <person name="Fairfield M.L."/>
            <person name="Rupani K.V."/>
            <person name="Jones D."/>
            <person name="Johannes K.P."/>
            <person name="Raychaudhuri S."/>
            <person name="Dwyer D.F."/>
            <person name="Jonsson A.H."/>
            <person name="Brenner M.B."/>
        </authorList>
    </citation>
    <scope>FUNCTION</scope>
    <scope>PROTEOLYTIC CLEAVAGE</scope>
</reference>
<reference key="67">
    <citation type="journal article" date="1988" name="Proc. Natl. Acad. Sci. U.S.A.">
        <title>Secondary structure of complement component C3a anaphylatoxin in solution as determined by NMR spectroscopy: differences between crystal and solution conformations.</title>
        <authorList>
            <person name="Nettesheim D.G."/>
            <person name="Edalji R.P."/>
            <person name="Mollison K.W."/>
            <person name="Greer J."/>
            <person name="Zuiderweg E.R.P."/>
        </authorList>
    </citation>
    <scope>STRUCTURE BY NMR OF C3A</scope>
</reference>
<reference evidence="94" key="68">
    <citation type="journal article" date="1998" name="Science">
        <title>X-ray crystal structure of C3d: a C3 fragment and ligand for complement receptor 2.</title>
        <authorList>
            <person name="Nagar B."/>
            <person name="Jones R.G."/>
            <person name="Diefenbach R.J."/>
            <person name="Isenman D.E."/>
            <person name="Rini J.M."/>
        </authorList>
    </citation>
    <scope>X-RAY CRYSTALLOGRAPHY (2.0 ANGSTROMS) OF C3D</scope>
    <scope>DISULFIDE BONDS</scope>
</reference>
<reference evidence="95" key="69">
    <citation type="journal article" date="2001" name="Science">
        <title>Structure of complement receptor 2 in complex with its C3d ligand.</title>
        <authorList>
            <person name="Szakonyi G."/>
            <person name="Guthridge J.M."/>
            <person name="Li D."/>
            <person name="Young K."/>
            <person name="Holers V.M."/>
            <person name="Chen X.S."/>
        </authorList>
    </citation>
    <scope>X-RAY CRYSTALLOGRAPHY (2.0 ANGSTROMS) OF C3D IN COMPLEX WITH CR2</scope>
    <scope>INTERACTION WITH CR2 (COMPLEMENT C3DG FRAGMENT)</scope>
    <scope>DISULFIDE BONDS</scope>
    <scope>MUTAGENESIS OF 1108-ILE-LEU-1109 AND ASN-1163</scope>
</reference>
<reference evidence="96" key="70">
    <citation type="journal article" date="2005" name="J. Mol. Biol.">
        <title>Solution structure of the complex between CR2 SCR 1-2 and C3d of human complement: an X-ray scattering and sedimentation modelling study.</title>
        <authorList>
            <person name="Gilbert H.E."/>
            <person name="Eaton J.T."/>
            <person name="Hannan J.P."/>
            <person name="Holers V.M."/>
            <person name="Perkins S.J."/>
        </authorList>
    </citation>
    <scope>X-RAY SCATTERING SOLUTION STRUCTURE OF C3D IN COMPLEX WITH CR2</scope>
</reference>
<reference evidence="97 98" key="71">
    <citation type="journal article" date="2005" name="Nature">
        <title>Structures of complement component C3 provide insights into the function and evolution of immunity.</title>
        <authorList>
            <person name="Janssen B.J.C."/>
            <person name="Huizinga E.G."/>
            <person name="Raaijmakers H.C.A."/>
            <person name="Roos A."/>
            <person name="Daha M.R."/>
            <person name="Nilsson-Ekdahl K."/>
            <person name="Nilsson B."/>
            <person name="Gros P."/>
        </authorList>
    </citation>
    <scope>X-RAY CRYSTALLOGRAPHY (2.4 ANGSTROMS) OF C3C</scope>
    <scope>X-RAY CRYSTALLOGRAPHY (3.3 ANGSTROMS) OF C3</scope>
    <scope>DISULFIDE BONDS</scope>
    <scope>PROTEOLYTIC CLEAVAGE</scope>
</reference>
<reference evidence="99" key="72">
    <citation type="journal article" date="2006" name="Nature">
        <title>Structure of C3b reveals conformational changes that underlie complement activity.</title>
        <authorList>
            <person name="Janssen B.J.C."/>
            <person name="Christodoulidou A."/>
            <person name="McCarthy A."/>
            <person name="Lambris J.D."/>
            <person name="Gros P."/>
        </authorList>
    </citation>
    <scope>X-RAY CRYSTALLOGRAPHY (4.0 ANGSTROMS) OF C3B</scope>
</reference>
<reference evidence="100 101" key="73">
    <citation type="journal article" date="2006" name="Nature">
        <title>Structure of C3b in complex with CRIg gives insights into regulation of complement activation.</title>
        <authorList>
            <person name="Wiesmann C."/>
            <person name="Katschke K.J."/>
            <person name="Yin J."/>
            <person name="Helmy K.Y."/>
            <person name="Steffek M."/>
            <person name="Fairbrother W.J."/>
            <person name="McCallum S.A."/>
            <person name="Embuscado L."/>
            <person name="DeForge L."/>
            <person name="Hass P.E."/>
            <person name="van Lookeren Campagne M."/>
        </authorList>
    </citation>
    <scope>X-RAY CRYSTALLOGRAPHY (3.1 ANGSTROMS) OF C3C IN COMPLEX WITH VSIG4</scope>
    <scope>X-RAY CRYSTALLOGRAPHY (4.1 ANGSTROMS) OF C3B IN COMPLEX WITH VSIG4</scope>
    <scope>PROTEOLYTIC CLEAVAGE</scope>
    <scope>ACTIVITY REGULATION</scope>
    <scope>GLYCOSYLATION AT ASN-85 AND ASN-939</scope>
</reference>
<reference evidence="102" key="74">
    <citation type="journal article" date="2007" name="J. Biol. Chem.">
        <title>Structure of compstatin in complex with complement component C3c reveals a new mechanism of complement inhibition.</title>
        <authorList>
            <person name="Janssen B.J."/>
            <person name="Halff E.F."/>
            <person name="Lambris J.D."/>
            <person name="Gros P."/>
        </authorList>
    </citation>
    <scope>X-RAY CRYSTALLOGRAPHY (2.4 ANGSTROMS) OF 23-936 AND 1321-1663 IN COMPLEX WITH INHIBITOR COMPSTATIN</scope>
    <scope>PROTEOLYTIC CLEAVAGE</scope>
    <scope>DISULFIDE BONDS</scope>
    <scope>GLYCOSYLATION AT ASN-85</scope>
</reference>
<reference key="75">
    <citation type="journal article" date="2007" name="Nat. Immunol.">
        <title>A structural basis for complement inhibition by Staphylococcus aureus.</title>
        <authorList>
            <person name="Hammel M."/>
            <person name="Sfyroera G."/>
            <person name="Ricklin D."/>
            <person name="Magotti P."/>
            <person name="Lambris J.D."/>
            <person name="Geisbrecht B.V."/>
        </authorList>
    </citation>
    <scope>X-RAY CRYSTALLOGRAPHY (2.20 ANGSTROMS) OF 996-1287 IN COMPLEX WITH STAPHYLOCOCCUS AUREUS PROTEIN FIB (MICROBIAL INFECTION)</scope>
</reference>
<reference evidence="103" key="76">
    <citation type="journal article" date="2009" name="Nat. Immunol.">
        <title>Structural and functional implications of the alternative complement pathway C3 convertase stabilized by a staphylococcal inhibitor.</title>
        <authorList>
            <person name="Rooijakkers S.H."/>
            <person name="Wu J."/>
            <person name="Ruyken M."/>
            <person name="van Domselaar R."/>
            <person name="Planken K.L."/>
            <person name="Tzekou A."/>
            <person name="Ricklin D."/>
            <person name="Lambris J.D."/>
            <person name="Janssen B.J."/>
            <person name="van Strijp J.A."/>
            <person name="Gros P."/>
        </authorList>
    </citation>
    <scope>X-RAY CRYSTALLOGRAPHY (3.90 ANGSTROMS) OF 23-667 AND 749-1663 IN COMPLEX WITH MG(2+)</scope>
    <scope>DISULFIDE BONDS</scope>
</reference>
<reference key="77">
    <citation type="journal article" date="2011" name="Mol. Immunol.">
        <title>A structural basis for Staphylococcal complement subversion: X-ray structure of the complement-binding domain of Staphylococcus aureus protein Sbi in complex with ligand C3d.</title>
        <authorList>
            <person name="Clark E.A."/>
            <person name="Crennell S."/>
            <person name="Upadhyay A."/>
            <person name="Zozulya A.V."/>
            <person name="Mackay J.D."/>
            <person name="Svergun D.I."/>
            <person name="Bagby S."/>
            <person name="van den Elsen J.M."/>
        </authorList>
    </citation>
    <scope>X-RAY CRYSTALLOGRAPHY (1.70 ANGSTROMS) OF 996-1303 IN COMPLEX WITH STAPHYLOCOCCUS AUREUS SBI (MICROBIAL INFECTION)</scope>
    <scope>SUBUNIT</scope>
</reference>
<reference evidence="104" key="78">
    <citation type="journal article" date="2011" name="Nat. Struct. Mol. Biol.">
        <title>Structural basis for engagement by complement factor H of C3b on a self surface.</title>
        <authorList>
            <person name="Morgan H.P."/>
            <person name="Schmidt C.Q."/>
            <person name="Guariento M."/>
            <person name="Blaum B.S."/>
            <person name="Gillespie D."/>
            <person name="Herbert A.P."/>
            <person name="Kavanagh D."/>
            <person name="Mertens H.D."/>
            <person name="Svergun D.I."/>
            <person name="Johansson C.M."/>
            <person name="Uhrin D."/>
            <person name="Barlow P.N."/>
            <person name="Hannan J.P."/>
        </authorList>
    </citation>
    <scope>X-RAY CRYSTALLOGRAPHY (2.10 ANGSTROMS) OF 996-1303</scope>
    <scope>INTERACTION WITH CFH (COMPLEMENT C3D FRAGMENT)</scope>
</reference>
<reference key="79">
    <citation type="journal article" date="2011" name="Proc. Natl. Acad. Sci. U.S.A.">
        <title>Dual interaction of factor H with C3d and glycosaminoglycans in host-nonhost discrimination by complement.</title>
        <authorList>
            <person name="Kajander T."/>
            <person name="Lehtinen M.J."/>
            <person name="Hyvaerinen S."/>
            <person name="Bhattacharjee A."/>
            <person name="Leung E."/>
            <person name="Isenman D.E."/>
            <person name="Meri S."/>
            <person name="Goldman A."/>
            <person name="Jokiranta T.S."/>
        </authorList>
    </citation>
    <scope>X-RAY CRYSTALLOGRAPHY (2.31 ANGSTROMS) OF 996-1287</scope>
    <scope>INTERACTION WITH CFH (COMPLEMENT C3B AND COMPLEMENT C3D FRAGMENT)</scope>
</reference>
<reference key="80">
    <citation type="journal article" date="2011" name="Science">
        <title>A crystal structure of the complex between human complement receptor 2 and its ligand C3d.</title>
        <authorList>
            <person name="van den Elsen J.M."/>
            <person name="Isenman D.E."/>
        </authorList>
    </citation>
    <scope>X-RAY CRYSTALLOGRAPHY (3.16 ANGSTROMS) OF 996-1303 IN COMPLEX WITH CR2</scope>
    <scope>INTERACTION WITH CR2</scope>
</reference>
<reference key="81">
    <citation type="journal article" date="2013" name="Nat. Genet.">
        <title>Rare variants in CFI, C3 and C9 are associated with high risk of advanced age-related macular degeneration.</title>
        <authorList>
            <person name="Seddon J.M."/>
            <person name="Yu Y."/>
            <person name="Miller E.C."/>
            <person name="Reynolds R."/>
            <person name="Tan P.L."/>
            <person name="Gowrisankar S."/>
            <person name="Goldstein J.I."/>
            <person name="Triebwasser M."/>
            <person name="Anderson H.E."/>
            <person name="Zerbib J."/>
            <person name="Kavanagh D."/>
            <person name="Souied E."/>
            <person name="Katsanis N."/>
            <person name="Daly M.J."/>
            <person name="Atkinson J.P."/>
            <person name="Raychaudhuri S."/>
        </authorList>
    </citation>
    <scope>VARIANT ARMD9 GLN-155</scope>
    <scope>CHARACTERIZATION OF VARIANT ARMD9 GLN-155</scope>
</reference>
<reference evidence="106" key="82">
    <citation type="journal article" date="2017" name="EMBO J.">
        <title>Functional and structural insight into properdin control of complement alternative pathway amplification.</title>
        <authorList>
            <person name="Pedersen D.V."/>
            <person name="Roumenina L."/>
            <person name="Jensen R.K."/>
            <person name="Gadeberg T.A."/>
            <person name="Marinozzi C."/>
            <person name="Picard C."/>
            <person name="Rybkine T."/>
            <person name="Thiel S."/>
            <person name="Soerensen U.B."/>
            <person name="Stover C."/>
            <person name="Fremeaux-Bacchi V."/>
            <person name="Andersen G.R."/>
        </authorList>
    </citation>
    <scope>X-RAY CRYSTALLOGRAPHY (6.0 ANGSTROMS) OF 23-667 AND 749-1663 IN COMPLEX WITH CFP; COMPLEMENT FACTOR B BB FRAGMENT AND STAPHYLOCOCCUS AUREUS PROTEIN SCN</scope>
    <scope>FUNCTION</scope>
    <scope>PROTEOLYTIC CLEAVAGE</scope>
    <scope>INTERACTION WITH CFP</scope>
</reference>
<reference evidence="105" key="83">
    <citation type="journal article" date="2017" name="Nat. Struct. Mol. Biol.">
        <title>Regulator-dependent mechanisms of C3b processing by factor I allow differentiation of immune responses.</title>
        <authorList>
            <person name="Xue X."/>
            <person name="Wu J."/>
            <person name="Ricklin D."/>
            <person name="Forneris F."/>
            <person name="Di Crescenzio P."/>
            <person name="Schmidt C.Q."/>
            <person name="Granneman J."/>
            <person name="Sharp T.H."/>
            <person name="Lambris J.D."/>
            <person name="Gros P."/>
        </authorList>
    </citation>
    <scope>X-RAY CRYSTALLOGRAPHY (4.20 ANGSTROMS) OF 23-667 AND 749-1663 IN COMPLEX WITH CFH AND CFI</scope>
    <scope>SUBUNIT (COMPLEMENT C3B)</scope>
</reference>
<reference evidence="107" key="84">
    <citation type="journal article" date="2019" name="Front. Immunol.">
        <title>Structural Basis for Properdin Oligomerization and Convertase Stimulation in the Human Complement System.</title>
        <authorList>
            <person name="Pedersen D.V."/>
            <person name="Gadeberg T.A.F."/>
            <person name="Thomas C."/>
            <person name="Wang Y."/>
            <person name="Joram N."/>
            <person name="Jensen R.K."/>
            <person name="Mazarakis S.M.M."/>
            <person name="Revel M."/>
            <person name="El Sissy C."/>
            <person name="Petersen S.V."/>
            <person name="Lindorff-Larsen K."/>
            <person name="Thiel S."/>
            <person name="Laursen N.S."/>
            <person name="Fremeaux-Bacchi V."/>
            <person name="Andersen G.R."/>
        </authorList>
    </citation>
    <scope>X-RAY CRYSTALLOGRAPHY (6.15 ANGSTROMS) OF 23-667 AND 749-1663 IN COMPLEX WITH COMPLEMENT FACTOR B BB FRAGMENT; CFP AND STAPHYLOCOCCUS AUREUS PROTEIN SCN</scope>
    <scope>FUNCTION</scope>
    <scope>PROTEOLYTIC CLEAVAGE</scope>
    <scope>INTERACTION WITH CFP</scope>
</reference>
<reference key="85">
    <citation type="journal article" date="1989" name="J. Immunol.">
        <title>The difference between human C3F and C3S results from a single amino acid change from an asparagine to an aspartate residue at position 1216 on the alpha-chain of the complement component, C3.</title>
        <authorList>
            <person name="Poznansky M.C."/>
            <person name="Clissold P.M."/>
            <person name="Lachmann P.J."/>
        </authorList>
    </citation>
    <scope>RETRACTED PAPER</scope>
</reference>
<reference key="86">
    <citation type="journal article" date="1989" name="J. Immunol.">
        <authorList>
            <person name="Poznansky M.C."/>
            <person name="Clissold P.M."/>
            <person name="Lachmann P.J."/>
        </authorList>
    </citation>
    <scope>RETRACTION NOTICE OF PUBMED:2473125</scope>
</reference>
<reference key="87">
    <citation type="journal article" date="1990" name="J. Exp. Med.">
        <title>Molecular basis of polymorphisms of human complement component C3.</title>
        <authorList>
            <person name="Botto M."/>
            <person name="Yong Fong K."/>
            <person name="So A.K."/>
            <person name="Koch C."/>
            <person name="Walport M.J."/>
        </authorList>
    </citation>
    <scope>VARIANTS GLY-102 AND LEU-314</scope>
</reference>
<reference key="88">
    <citation type="journal article" date="1994" name="J. Biol. Chem.">
        <title>Inherited human complement C3 deficiency. An amino acid substitution in the beta-chain (Asp549 to Asn) impairs C3 secretion.</title>
        <authorList>
            <person name="Singer L."/>
            <person name="Whitehead W.T."/>
            <person name="Akama H."/>
            <person name="Katz Y."/>
            <person name="Fishelson Z."/>
            <person name="Wetsel R.A."/>
        </authorList>
    </citation>
    <scope>VARIANT C3D ASN-549</scope>
</reference>
<reference key="89">
    <citation type="journal article" date="2007" name="N. Engl. J. Med.">
        <title>Complement C3 variant and the risk of age-related macular degeneration.</title>
        <authorList>
            <person name="Yates J.R.W."/>
            <person name="Sepp T."/>
            <person name="Matharu B.K."/>
            <person name="Khan J.C."/>
            <person name="Thurlby D.A."/>
            <person name="Shahid H."/>
            <person name="Clayton D.G."/>
            <person name="Hayward C."/>
            <person name="Morgan J."/>
            <person name="Wright A.F."/>
            <person name="Armbrecht A.M."/>
            <person name="Dhillon B."/>
            <person name="Deary I.J."/>
            <person name="Redmond E."/>
            <person name="Bird A.C."/>
            <person name="Moore A.T."/>
        </authorList>
    </citation>
    <scope>ASSOCIATION OF VARIANT GLY-102 WITH ARMD9</scope>
</reference>
<reference key="90">
    <citation type="journal article" date="2008" name="Blood">
        <title>Mutations in complement C3 predispose to development of atypical hemolytic uremic syndrome.</title>
        <authorList>
            <person name="Fremeaux-Bacchi V."/>
            <person name="Miller E.C."/>
            <person name="Liszewski M.K."/>
            <person name="Strain L."/>
            <person name="Blouin J."/>
            <person name="Brown A.L."/>
            <person name="Moghal N."/>
            <person name="Kaplan B.S."/>
            <person name="Weiss R.A."/>
            <person name="Lhotta K."/>
            <person name="Kapur G."/>
            <person name="Mattoo T."/>
            <person name="Nivet H."/>
            <person name="Wong W."/>
            <person name="Gie S."/>
            <person name="Hurault de Ligny B."/>
            <person name="Fischbach M."/>
            <person name="Gupta R."/>
            <person name="Hauhart R."/>
            <person name="Meunier V."/>
            <person name="Loirat C."/>
            <person name="Dragon-Durey M.A."/>
            <person name="Fridman W.H."/>
            <person name="Janssen B.J."/>
            <person name="Goodship T.H."/>
            <person name="Atkinson J.P."/>
        </authorList>
    </citation>
    <scope>VARIANTS AHUS5 GLN-592; TRP-592; TRP-735; VAL-1094; ASN-1115; TRP-1158; LYS-1161 AND ASP-1464</scope>
    <scope>CHARACTERIZATION OF VARIANTS AHUS5 GLN-592; TRP-592; VAL-1094; ASN-1115 AND LYS-1161</scope>
</reference>
<reference key="91">
    <citation type="journal article" date="2010" name="Hum. Mutat.">
        <title>Mutations in alternative pathway complement proteins in American patients with atypical hemolytic uremic syndrome.</title>
        <authorList>
            <person name="Maga T.K."/>
            <person name="Nishimura C.J."/>
            <person name="Weaver A.E."/>
            <person name="Frees K.L."/>
            <person name="Smith R.J.H."/>
        </authorList>
    </citation>
    <scope>VARIANTS AHUS5 VAL-603 AND LEU-1042</scope>
</reference>
<reference key="92">
    <citation type="journal article" date="2011" name="J. Mol. Cell Biol.">
        <title>Quantitative detection of single amino acid polymorphisms by targeted proteomics.</title>
        <authorList>
            <person name="Su Z.D."/>
            <person name="Sun L."/>
            <person name="Yu D.X."/>
            <person name="Li R.X."/>
            <person name="Li H.X."/>
            <person name="Yu Z.J."/>
            <person name="Sheng Q.H."/>
            <person name="Lin X."/>
            <person name="Zeng R."/>
            <person name="Wu J.R."/>
        </authorList>
    </citation>
    <scope>VARIANT ASN-549</scope>
    <scope>IDENTIFICATION BY MASS SPECTROMETRY</scope>
</reference>
<reference key="93">
    <citation type="journal article" date="2011" name="Proc. Natl. Acad. Sci. U.S.A.">
        <title>Common polymorphisms in C3, factor B, and factor H collaborate to determine systemic complement activity and disease risk.</title>
        <authorList>
            <person name="Heurich M."/>
            <person name="Martinez-Barricarte R."/>
            <person name="Francis N.J."/>
            <person name="Roberts D.L."/>
            <person name="Rodriguez de Cordoba S."/>
            <person name="Morgan B.P."/>
            <person name="Harris C.L."/>
        </authorList>
    </citation>
    <scope>CHARACTERIZATION OF VARIANT GLY-102</scope>
</reference>
<keyword id="KW-0002">3D-structure</keyword>
<keyword id="KW-0913">Age-related macular degeneration</keyword>
<keyword id="KW-0165">Cleavage on pair of basic residues</keyword>
<keyword id="KW-0179">Complement alternate pathway</keyword>
<keyword id="KW-0180">Complement pathway</keyword>
<keyword id="KW-0903">Direct protein sequencing</keyword>
<keyword id="KW-0225">Disease variant</keyword>
<keyword id="KW-1015">Disulfide bond</keyword>
<keyword id="KW-0276">Fatty acid metabolism</keyword>
<keyword id="KW-0325">Glycoprotein</keyword>
<keyword id="KW-1068">Hemolytic uremic syndrome</keyword>
<keyword id="KW-0391">Immunity</keyword>
<keyword id="KW-0395">Inflammatory response</keyword>
<keyword id="KW-0399">Innate immunity</keyword>
<keyword id="KW-0443">Lipid metabolism</keyword>
<keyword id="KW-0597">Phosphoprotein</keyword>
<keyword id="KW-1267">Proteomics identification</keyword>
<keyword id="KW-1185">Reference proteome</keyword>
<keyword id="KW-0964">Secreted</keyword>
<keyword id="KW-0732">Signal</keyword>
<keyword id="KW-0882">Thioester bond</keyword>
<organism>
    <name type="scientific">Homo sapiens</name>
    <name type="common">Human</name>
    <dbReference type="NCBI Taxonomy" id="9606"/>
    <lineage>
        <taxon>Eukaryota</taxon>
        <taxon>Metazoa</taxon>
        <taxon>Chordata</taxon>
        <taxon>Craniata</taxon>
        <taxon>Vertebrata</taxon>
        <taxon>Euteleostomi</taxon>
        <taxon>Mammalia</taxon>
        <taxon>Eutheria</taxon>
        <taxon>Euarchontoglires</taxon>
        <taxon>Primates</taxon>
        <taxon>Haplorrhini</taxon>
        <taxon>Catarrhini</taxon>
        <taxon>Hominidae</taxon>
        <taxon>Homo</taxon>
    </lineage>
</organism>
<feature type="signal peptide" evidence="76">
    <location>
        <begin position="1"/>
        <end position="22"/>
    </location>
</feature>
<feature type="chain" id="PRO_0000005907" description="Complement C3">
    <location>
        <begin position="23"/>
        <end position="1663"/>
    </location>
</feature>
<feature type="chain" id="PRO_0000005908" description="Complement C3 beta chain" evidence="90">
    <location>
        <begin position="23"/>
        <end position="667"/>
    </location>
</feature>
<feature type="chain" id="PRO_0000430430" description="C3-beta-c" evidence="1">
    <location>
        <begin position="569"/>
        <end position="667"/>
    </location>
</feature>
<feature type="chain" id="PRO_0000005909" description="Complement C3 alpha chain">
    <location>
        <begin position="672"/>
        <end position="1663"/>
    </location>
</feature>
<feature type="chain" id="PRO_0000005910" description="C3a anaphylatoxin" evidence="8">
    <location>
        <begin position="672"/>
        <end position="748"/>
    </location>
</feature>
<feature type="chain" id="PRO_0000419935" description="Acylation stimulating protein">
    <location>
        <begin position="672"/>
        <end position="747"/>
    </location>
</feature>
<feature type="chain" id="PRO_0000005911" description="Complement C3b" evidence="90">
    <location>
        <begin position="749"/>
        <end position="1663"/>
    </location>
</feature>
<feature type="chain" id="PRO_0000005912" description="Complement C3c alpha' chain fragment 1">
    <location>
        <begin position="749"/>
        <end position="954"/>
    </location>
</feature>
<feature type="chain" id="PRO_0000005913" description="Complement C3dg fragment">
    <location>
        <begin position="955"/>
        <end position="1303"/>
    </location>
</feature>
<feature type="chain" id="PRO_0000005914" description="Complement C3g fragment">
    <location>
        <begin position="955"/>
        <end position="1001"/>
    </location>
</feature>
<feature type="chain" id="PRO_0000005915" description="Complement C3d fragment" evidence="92">
    <location>
        <begin position="1002"/>
        <end position="1303"/>
    </location>
</feature>
<feature type="peptide" id="PRO_0000005916" description="Complement C3f fragment" evidence="76">
    <location>
        <begin position="1304"/>
        <end position="1320"/>
    </location>
</feature>
<feature type="chain" id="PRO_0000273948" description="Complement C3c alpha' chain fragment 2">
    <location>
        <begin position="1321"/>
        <end position="1663"/>
    </location>
</feature>
<feature type="domain" description="Anaphylatoxin-like" evidence="2">
    <location>
        <begin position="693"/>
        <end position="728"/>
    </location>
</feature>
<feature type="domain" description="NTR" evidence="3">
    <location>
        <begin position="1518"/>
        <end position="1661"/>
    </location>
</feature>
<feature type="region of interest" description="Disordered" evidence="4">
    <location>
        <begin position="954"/>
        <end position="973"/>
    </location>
</feature>
<feature type="region of interest" description="Interaction with CFP/properdin" evidence="49 55">
    <location>
        <begin position="1634"/>
        <end position="1659"/>
    </location>
</feature>
<feature type="site" description="(Microbial infection) Cleavage; by S.pyogenes SpeB" evidence="25">
    <location>
        <begin position="541"/>
        <end position="542"/>
    </location>
</feature>
<feature type="site" description="(Microbial infection) Cleavage; by N.meningitidis NalP" evidence="44">
    <location>
        <begin position="744"/>
        <end position="745"/>
    </location>
</feature>
<feature type="site" description="Cleavage; by carboxypeptidases" evidence="60 68">
    <location>
        <begin position="747"/>
        <end position="748"/>
    </location>
</feature>
<feature type="site" description="Cleavage; by C3 convertase" evidence="90">
    <location>
        <begin position="748"/>
        <end position="749"/>
    </location>
</feature>
<feature type="site" description="Cleavage; by factor I" evidence="91">
    <location>
        <begin position="954"/>
        <end position="955"/>
    </location>
</feature>
<feature type="site" description="Cleavage; by factor I" evidence="91">
    <location>
        <begin position="1303"/>
        <end position="1304"/>
    </location>
</feature>
<feature type="site" description="Cleavage; by factor I" evidence="91">
    <location>
        <begin position="1320"/>
        <end position="1321"/>
    </location>
</feature>
<feature type="site" description="Coordinates Mg(2+) for interaction with Complement factor B Bb fragment (CFB)" evidence="49 55">
    <location>
        <position position="1663"/>
    </location>
</feature>
<feature type="modified residue" description="Phosphoserine; by FAM20C" evidence="48">
    <location>
        <position position="38"/>
    </location>
</feature>
<feature type="modified residue" description="Phosphoserine; by FAM20C" evidence="48">
    <location>
        <position position="70"/>
    </location>
</feature>
<feature type="modified residue" description="Phosphoserine; by FAM20C" evidence="48">
    <location>
        <position position="297"/>
    </location>
</feature>
<feature type="modified residue" description="Phosphoserine; by FAM20C" evidence="48">
    <location>
        <position position="303"/>
    </location>
</feature>
<feature type="modified residue" description="Phosphoserine; by FAM20C" evidence="48">
    <location>
        <position position="672"/>
    </location>
</feature>
<feature type="modified residue" description="Phosphoserine; by FAM20C" evidence="48">
    <location>
        <position position="968"/>
    </location>
</feature>
<feature type="modified residue" description="Phosphoserine; by FAM20C" evidence="48">
    <location>
        <position position="1321"/>
    </location>
</feature>
<feature type="modified residue" description="Phosphoserine; by FAM20C" evidence="48">
    <location>
        <position position="1573"/>
    </location>
</feature>
<feature type="glycosylation site" description="N-linked (GlcNAc...) asparagine" evidence="10 16 18 19 24 29 46">
    <location>
        <position position="85"/>
    </location>
</feature>
<feature type="glycosylation site" description="N-linked (GlcNAc...) asparagine" evidence="12 18 19">
    <location>
        <position position="939"/>
    </location>
</feature>
<feature type="glycosylation site" description="N-linked (GlcNAc...) asparagine" evidence="18">
    <location>
        <position position="1617"/>
    </location>
</feature>
<feature type="disulfide bond" description="Interchain (with C-816)" evidence="15 97 98">
    <location>
        <begin position="559"/>
        <end position="816"/>
    </location>
</feature>
<feature type="disulfide bond" evidence="15 97 98">
    <location>
        <begin position="627"/>
        <end position="662"/>
    </location>
</feature>
<feature type="disulfide bond" evidence="15 77 97 98">
    <location>
        <begin position="693"/>
        <end position="720"/>
    </location>
</feature>
<feature type="disulfide bond" evidence="15 97 98">
    <location>
        <begin position="694"/>
        <end position="727"/>
    </location>
</feature>
<feature type="disulfide bond" evidence="15 97 98">
    <location>
        <begin position="707"/>
        <end position="728"/>
    </location>
</feature>
<feature type="disulfide bond" description="Interchain (with C-559)" evidence="15 97 98">
    <location>
        <position position="816"/>
    </location>
</feature>
<feature type="disulfide bond" evidence="15 97 98">
    <location>
        <begin position="873"/>
        <end position="1513"/>
    </location>
</feature>
<feature type="disulfide bond" evidence="15 97 98">
    <location>
        <begin position="1101"/>
        <end position="1158"/>
    </location>
</feature>
<feature type="disulfide bond" evidence="15 97 98">
    <location>
        <begin position="1358"/>
        <end position="1489"/>
    </location>
</feature>
<feature type="disulfide bond" evidence="15 97 98">
    <location>
        <begin position="1389"/>
        <end position="1458"/>
    </location>
</feature>
<feature type="disulfide bond" evidence="15 97 98">
    <location>
        <begin position="1506"/>
        <end position="1511"/>
    </location>
</feature>
<feature type="disulfide bond" evidence="15 97 98">
    <location>
        <begin position="1518"/>
        <end position="1590"/>
    </location>
</feature>
<feature type="disulfide bond" evidence="15 97 98">
    <location>
        <begin position="1537"/>
        <end position="1661"/>
    </location>
</feature>
<feature type="disulfide bond" evidence="15 97 98">
    <location>
        <begin position="1637"/>
        <end position="1646"/>
    </location>
</feature>
<feature type="cross-link" description="Isoglutamyl cysteine thioester (Cys-Gln)" evidence="13 61">
    <location>
        <begin position="1010"/>
        <end position="1013"/>
    </location>
</feature>
<feature type="sequence variant" id="VAR_001983" description="In allele C3F; risk factor for ARMD9; results in decreased binding affinity for regulator factor H; results in reduced sensitivity to cleavage by factor I; dbSNP:rs2230199." evidence="31 40 82">
    <original>R</original>
    <variation>G</variation>
    <location>
        <position position="102"/>
    </location>
</feature>
<feature type="sequence variant" id="VAR_070941" description="In ARMD9; results in resistance to proteolytic inactivation by CFH and CFI; dbSNP:rs147859257." evidence="43">
    <original>K</original>
    <variation>Q</variation>
    <location>
        <position position="155"/>
    </location>
</feature>
<feature type="sequence variant" id="VAR_001984" description="In dbSNP:rs1047286." evidence="31 46 82">
    <original>P</original>
    <variation>L</variation>
    <location>
        <position position="314"/>
    </location>
</feature>
<feature type="sequence variant" id="VAR_020262" description="In dbSNP:rs11569422.">
    <original>E</original>
    <variation>D</variation>
    <location>
        <position position="469"/>
    </location>
</feature>
<feature type="sequence variant" id="VAR_001985" description="In C3D; impairs secretion; variant confirmed at protein level; dbSNP:rs1449441916." evidence="41 72">
    <original>D</original>
    <variation>N</variation>
    <location>
        <position position="549"/>
    </location>
</feature>
<feature type="sequence variant" id="VAR_063213" description="In AHUS5; leads to impaired binding to the regulator CD46/MCP and resistance to cleavage by factor I; dbSNP:rs121909583." evidence="27">
    <original>R</original>
    <variation>Q</variation>
    <location>
        <position position="592"/>
    </location>
</feature>
<feature type="sequence variant" id="VAR_063214" description="In AHUS5; leads to impaired binding to the regulator CD46/MCP and resistance to cleavage by factor I; dbSNP:rs771353792." evidence="27">
    <original>R</original>
    <variation>W</variation>
    <location>
        <position position="592"/>
    </location>
</feature>
<feature type="sequence variant" id="VAR_063654" description="In AHUS5." evidence="33">
    <original>F</original>
    <variation>V</variation>
    <location>
        <position position="603"/>
    </location>
</feature>
<feature type="sequence variant" id="VAR_063215" description="In AHUS5; dbSNP:rs117793540." evidence="27">
    <original>R</original>
    <variation>W</variation>
    <location>
        <position position="735"/>
    </location>
</feature>
<feature type="sequence variant" id="VAR_019206" description="In dbSNP:rs11569472." evidence="82">
    <original>R</original>
    <variation>K</variation>
    <location>
        <position position="863"/>
    </location>
</feature>
<feature type="sequence variant" id="VAR_063655" description="In AHUS5." evidence="33">
    <original>R</original>
    <variation>L</variation>
    <location>
        <position position="1042"/>
    </location>
</feature>
<feature type="sequence variant" id="VAR_063216" description="In AHUS5; leads to impaired binding to the regulator CD46/MCP and resistance to cleavage by factor I; dbSNP:rs121909584." evidence="27">
    <original>A</original>
    <variation>V</variation>
    <location>
        <position position="1094"/>
    </location>
</feature>
<feature type="sequence variant" id="VAR_063217" description="In AHUS5; leads to impaired binding to the regulator CD46/MCP and resistance to cleavage by factor I; dbSNP:rs121909585." evidence="27">
    <original>D</original>
    <variation>N</variation>
    <location>
        <position position="1115"/>
    </location>
</feature>
<feature type="sequence variant" id="VAR_063218" description="In AHUS5." evidence="27">
    <original>C</original>
    <variation>W</variation>
    <location>
        <position position="1158"/>
    </location>
</feature>
<feature type="sequence variant" id="VAR_063219" description="In AHUS5; leads to impaired binding to the regulator CD46/MCP and resistance to cleavage by factor I; dbSNP:rs2145404130." evidence="27">
    <original>Q</original>
    <variation>K</variation>
    <location>
        <position position="1161"/>
    </location>
</feature>
<feature type="sequence variant" id="VAR_019207" description="In dbSNP:rs11569534." evidence="82">
    <original>G</original>
    <variation>D</variation>
    <location>
        <position position="1224"/>
    </location>
</feature>
<feature type="sequence variant" id="VAR_019208" description="In dbSNP:rs11569541." evidence="82">
    <original>I</original>
    <variation>T</variation>
    <location>
        <position position="1367"/>
    </location>
</feature>
<feature type="sequence variant" id="VAR_063220" description="In AHUS5." evidence="27">
    <original>H</original>
    <variation>D</variation>
    <location>
        <position position="1464"/>
    </location>
</feature>
<feature type="sequence variant" id="VAR_029792" description="In dbSNP:rs7256789.">
    <original>Q</original>
    <variation>R</variation>
    <location>
        <position position="1521"/>
    </location>
</feature>
<feature type="sequence variant" id="VAR_029793" description="In dbSNP:rs1803225.">
    <original>H</original>
    <variation>N</variation>
    <location>
        <position position="1601"/>
    </location>
</feature>
<feature type="sequence variant" id="VAR_029326" description="In dbSNP:rs2230210.">
    <original>S</original>
    <variation>R</variation>
    <location>
        <position position="1619"/>
    </location>
</feature>
<feature type="mutagenesis site" description="Minor effect on binding of C3d to CR2." evidence="32 34">
    <original>D</original>
    <variation>A</variation>
    <location>
        <position position="1029"/>
    </location>
</feature>
<feature type="mutagenesis site" description="Impaired binding of C3d to CR2." evidence="32 34">
    <original>E</original>
    <variation>A</variation>
    <location>
        <position position="1030"/>
    </location>
</feature>
<feature type="mutagenesis site" description="Impaired binding of C3d to CR2." evidence="32 34">
    <original>E</original>
    <variation>A</variation>
    <location>
        <position position="1032"/>
    </location>
</feature>
<feature type="mutagenesis site" description="No effect on binding of C3d to CR2." evidence="32">
    <original>E</original>
    <variation>A</variation>
    <location>
        <position position="1035"/>
    </location>
</feature>
<feature type="mutagenesis site" description="Impaired binding of C3d to CR2." evidence="32">
    <original>R</original>
    <variation>M</variation>
    <location>
        <position position="1042"/>
    </location>
</feature>
<feature type="mutagenesis site" description="Impaired binding of C3d to CR2; when associated with A-1163." evidence="6">
    <original>IL</original>
    <variation>RR</variation>
    <location>
        <begin position="1108"/>
        <end position="1109"/>
    </location>
</feature>
<feature type="mutagenesis site" description="No effect on binding of C3d to CR2." evidence="34">
    <original>E</original>
    <variation>A</variation>
    <location>
        <position position="1110"/>
    </location>
</feature>
<feature type="mutagenesis site" description="No effect on binding of C3d to CR2." evidence="34">
    <original>D</original>
    <variation>A</variation>
    <location>
        <position position="1115"/>
    </location>
</feature>
<feature type="mutagenesis site" description="No effect on binding of C3d to CR2." evidence="34">
    <original>D</original>
    <variation>A</variation>
    <location>
        <position position="1121"/>
    </location>
</feature>
<feature type="mutagenesis site" description="No effect on binding of C3d to CR2." evidence="32 34">
    <original>D</original>
    <variation>A</variation>
    <location>
        <position position="1140"/>
    </location>
</feature>
<feature type="mutagenesis site" description="Impaired binding of C3d to CR2." evidence="32 34">
    <original>E</original>
    <variation>A</variation>
    <location>
        <position position="1153"/>
    </location>
</feature>
<feature type="mutagenesis site" description="Impaired binding of C3d to CR2." evidence="32 34">
    <original>D</original>
    <variation>A</variation>
    <location>
        <position position="1156"/>
    </location>
</feature>
<feature type="mutagenesis site" description="Impaired binding of C3d to CR2." evidence="32 34">
    <original>E</original>
    <variation>A</variation>
    <location>
        <position position="1159"/>
    </location>
</feature>
<feature type="mutagenesis site" description="Minor effect on binding of C3d to CR2." evidence="32 34">
    <original>E</original>
    <variation>A</variation>
    <location>
        <position position="1160"/>
    </location>
</feature>
<feature type="mutagenesis site" description="No effect on binding of C3d to CR2. Impaired binding of C3d to CR2; when associated with 1108-R-R-1109." evidence="6 32 34">
    <original>N</original>
    <variation>A</variation>
    <location>
        <position position="1163"/>
    </location>
</feature>
<feature type="mutagenesis site" description="Impaired binding of C3d to CR2." evidence="6 32 34">
    <original>N</original>
    <variation>R</variation>
    <location>
        <position position="1163"/>
    </location>
</feature>
<feature type="mutagenesis site" description="Impaired binding of C3d to CR2." evidence="32">
    <original>K</original>
    <variation>A</variation>
    <location>
        <position position="1284"/>
    </location>
</feature>
<feature type="sequence conflict" description="In Ref. 6; AA sequence." evidence="89" ref="6">
    <original>D</original>
    <variation>N</variation>
    <location>
        <position position="681"/>
    </location>
</feature>
<feature type="sequence conflict" description="In Ref. 6; AA sequence." evidence="89" ref="6">
    <original>E</original>
    <variation>Q</variation>
    <location>
        <position position="700"/>
    </location>
</feature>
<feature type="sequence conflict" description="In Ref. 9; AA sequence." evidence="89" ref="9">
    <original>H</original>
    <variation>S</variation>
    <location>
        <position position="1026"/>
    </location>
</feature>
<feature type="strand" evidence="130">
    <location>
        <begin position="25"/>
        <end position="35"/>
    </location>
</feature>
<feature type="strand" evidence="130">
    <location>
        <begin position="40"/>
        <end position="47"/>
    </location>
</feature>
<feature type="strand" evidence="130">
    <location>
        <begin position="53"/>
        <end position="61"/>
    </location>
</feature>
<feature type="turn" evidence="130">
    <location>
        <begin position="62"/>
        <end position="64"/>
    </location>
</feature>
<feature type="strand" evidence="130">
    <location>
        <begin position="67"/>
        <end position="76"/>
    </location>
</feature>
<feature type="turn" evidence="130">
    <location>
        <begin position="78"/>
        <end position="82"/>
    </location>
</feature>
<feature type="strand" evidence="130">
    <location>
        <begin position="83"/>
        <end position="88"/>
    </location>
</feature>
<feature type="strand" evidence="135">
    <location>
        <begin position="96"/>
        <end position="98"/>
    </location>
</feature>
<feature type="strand" evidence="136">
    <location>
        <begin position="99"/>
        <end position="101"/>
    </location>
</feature>
<feature type="strand" evidence="130">
    <location>
        <begin position="104"/>
        <end position="112"/>
    </location>
</feature>
<feature type="strand" evidence="130">
    <location>
        <begin position="115"/>
        <end position="124"/>
    </location>
</feature>
<feature type="strand" evidence="130">
    <location>
        <begin position="129"/>
        <end position="135"/>
    </location>
</feature>
<feature type="strand" evidence="130">
    <location>
        <begin position="137"/>
        <end position="139"/>
    </location>
</feature>
<feature type="strand" evidence="130">
    <location>
        <begin position="144"/>
        <end position="152"/>
    </location>
</feature>
<feature type="strand" evidence="130">
    <location>
        <begin position="162"/>
        <end position="168"/>
    </location>
</feature>
<feature type="strand" evidence="130">
    <location>
        <begin position="174"/>
        <end position="181"/>
    </location>
</feature>
<feature type="turn" evidence="130">
    <location>
        <begin position="183"/>
        <end position="187"/>
    </location>
</feature>
<feature type="strand" evidence="130">
    <location>
        <begin position="188"/>
        <end position="194"/>
    </location>
</feature>
<feature type="strand" evidence="130">
    <location>
        <begin position="202"/>
        <end position="210"/>
    </location>
</feature>
<feature type="strand" evidence="117">
    <location>
        <begin position="214"/>
        <end position="216"/>
    </location>
</feature>
<feature type="strand" evidence="130">
    <location>
        <begin position="218"/>
        <end position="224"/>
    </location>
</feature>
<feature type="strand" evidence="130">
    <location>
        <begin position="231"/>
        <end position="244"/>
    </location>
</feature>
<feature type="strand" evidence="130">
    <location>
        <begin position="251"/>
        <end position="259"/>
    </location>
</feature>
<feature type="strand" evidence="130">
    <location>
        <begin position="267"/>
        <end position="277"/>
    </location>
</feature>
<feature type="strand" evidence="130">
    <location>
        <begin position="280"/>
        <end position="283"/>
    </location>
</feature>
<feature type="helix" evidence="130">
    <location>
        <begin position="285"/>
        <end position="287"/>
    </location>
</feature>
<feature type="strand" evidence="130">
    <location>
        <begin position="289"/>
        <end position="294"/>
    </location>
</feature>
<feature type="strand" evidence="130">
    <location>
        <begin position="297"/>
        <end position="302"/>
    </location>
</feature>
<feature type="helix" evidence="130">
    <location>
        <begin position="304"/>
        <end position="309"/>
    </location>
</feature>
<feature type="turn" evidence="130">
    <location>
        <begin position="310"/>
        <end position="312"/>
    </location>
</feature>
<feature type="helix" evidence="130">
    <location>
        <begin position="316"/>
        <end position="319"/>
    </location>
</feature>
<feature type="strand" evidence="130">
    <location>
        <begin position="323"/>
        <end position="332"/>
    </location>
</feature>
<feature type="strand" evidence="130">
    <location>
        <begin position="338"/>
        <end position="352"/>
    </location>
</feature>
<feature type="strand" evidence="130">
    <location>
        <begin position="354"/>
        <end position="356"/>
    </location>
</feature>
<feature type="strand" evidence="135">
    <location>
        <begin position="358"/>
        <end position="360"/>
    </location>
</feature>
<feature type="strand" evidence="130">
    <location>
        <begin position="362"/>
        <end position="364"/>
    </location>
</feature>
<feature type="strand" evidence="132">
    <location>
        <begin position="366"/>
        <end position="368"/>
    </location>
</feature>
<feature type="strand" evidence="130">
    <location>
        <begin position="370"/>
        <end position="377"/>
    </location>
</feature>
<feature type="strand" evidence="121">
    <location>
        <begin position="379"/>
        <end position="381"/>
    </location>
</feature>
<feature type="strand" evidence="130">
    <location>
        <begin position="388"/>
        <end position="393"/>
    </location>
</feature>
<feature type="helix" evidence="113">
    <location>
        <begin position="395"/>
        <end position="397"/>
    </location>
</feature>
<feature type="strand" evidence="130">
    <location>
        <begin position="398"/>
        <end position="400"/>
    </location>
</feature>
<feature type="strand" evidence="130">
    <location>
        <begin position="405"/>
        <end position="411"/>
    </location>
</feature>
<feature type="strand" evidence="125">
    <location>
        <begin position="415"/>
        <end position="417"/>
    </location>
</feature>
<feature type="strand" evidence="130">
    <location>
        <begin position="420"/>
        <end position="426"/>
    </location>
</feature>
<feature type="turn" evidence="110">
    <location>
        <begin position="429"/>
        <end position="431"/>
    </location>
</feature>
<feature type="helix" evidence="130">
    <location>
        <begin position="433"/>
        <end position="435"/>
    </location>
</feature>
<feature type="strand" evidence="130">
    <location>
        <begin position="438"/>
        <end position="445"/>
    </location>
</feature>
<feature type="helix" evidence="130">
    <location>
        <begin position="449"/>
        <end position="451"/>
    </location>
</feature>
<feature type="strand" evidence="130">
    <location>
        <begin position="455"/>
        <end position="459"/>
    </location>
</feature>
<feature type="strand" evidence="130">
    <location>
        <begin position="470"/>
        <end position="478"/>
    </location>
</feature>
<feature type="turn" evidence="130">
    <location>
        <begin position="481"/>
        <end position="483"/>
    </location>
</feature>
<feature type="helix" evidence="130">
    <location>
        <begin position="484"/>
        <end position="486"/>
    </location>
</feature>
<feature type="strand" evidence="130">
    <location>
        <begin position="489"/>
        <end position="496"/>
    </location>
</feature>
<feature type="strand" evidence="130">
    <location>
        <begin position="499"/>
        <end position="507"/>
    </location>
</feature>
<feature type="strand" evidence="130">
    <location>
        <begin position="513"/>
        <end position="520"/>
    </location>
</feature>
<feature type="helix" evidence="130">
    <location>
        <begin position="523"/>
        <end position="525"/>
    </location>
</feature>
<feature type="strand" evidence="130">
    <location>
        <begin position="527"/>
        <end position="538"/>
    </location>
</feature>
<feature type="strand" evidence="113">
    <location>
        <begin position="540"/>
        <end position="542"/>
    </location>
</feature>
<feature type="strand" evidence="130">
    <location>
        <begin position="544"/>
        <end position="554"/>
    </location>
</feature>
<feature type="strand" evidence="130">
    <location>
        <begin position="563"/>
        <end position="569"/>
    </location>
</feature>
<feature type="strand" evidence="118">
    <location>
        <begin position="571"/>
        <end position="573"/>
    </location>
</feature>
<feature type="strand" evidence="130">
    <location>
        <begin position="580"/>
        <end position="588"/>
    </location>
</feature>
<feature type="strand" evidence="130">
    <location>
        <begin position="592"/>
        <end position="599"/>
    </location>
</feature>
<feature type="helix" evidence="130">
    <location>
        <begin position="600"/>
        <end position="605"/>
    </location>
</feature>
<feature type="helix" evidence="130">
    <location>
        <begin position="613"/>
        <end position="622"/>
    </location>
</feature>
<feature type="strand" evidence="130">
    <location>
        <begin position="628"/>
        <end position="630"/>
    </location>
</feature>
<feature type="helix" evidence="130">
    <location>
        <begin position="635"/>
        <end position="641"/>
    </location>
</feature>
<feature type="strand" evidence="130">
    <location>
        <begin position="644"/>
        <end position="648"/>
    </location>
</feature>
<feature type="strand" evidence="132">
    <location>
        <begin position="659"/>
        <end position="661"/>
    </location>
</feature>
<feature type="helix" evidence="122">
    <location>
        <begin position="675"/>
        <end position="684"/>
    </location>
</feature>
<feature type="strand" evidence="134">
    <location>
        <begin position="685"/>
        <end position="687"/>
    </location>
</feature>
<feature type="helix" evidence="123">
    <location>
        <begin position="688"/>
        <end position="697"/>
    </location>
</feature>
<feature type="turn" evidence="133">
    <location>
        <begin position="702"/>
        <end position="705"/>
    </location>
</feature>
<feature type="helix" evidence="123">
    <location>
        <begin position="707"/>
        <end position="710"/>
    </location>
</feature>
<feature type="turn" evidence="122">
    <location>
        <begin position="712"/>
        <end position="714"/>
    </location>
</feature>
<feature type="helix" evidence="123">
    <location>
        <begin position="718"/>
        <end position="743"/>
    </location>
</feature>
<feature type="strand" evidence="119">
    <location>
        <begin position="753"/>
        <end position="755"/>
    </location>
</feature>
<feature type="helix" evidence="130">
    <location>
        <begin position="758"/>
        <end position="760"/>
    </location>
</feature>
<feature type="strand" evidence="130">
    <location>
        <begin position="769"/>
        <end position="771"/>
    </location>
</feature>
<feature type="strand" evidence="130">
    <location>
        <begin position="775"/>
        <end position="777"/>
    </location>
</feature>
<feature type="strand" evidence="130">
    <location>
        <begin position="783"/>
        <end position="794"/>
    </location>
</feature>
<feature type="strand" evidence="130">
    <location>
        <begin position="800"/>
        <end position="810"/>
    </location>
</feature>
<feature type="turn" evidence="130">
    <location>
        <begin position="811"/>
        <end position="813"/>
    </location>
</feature>
<feature type="strand" evidence="130">
    <location>
        <begin position="814"/>
        <end position="817"/>
    </location>
</feature>
<feature type="strand" evidence="130">
    <location>
        <begin position="821"/>
        <end position="825"/>
    </location>
</feature>
<feature type="strand" evidence="130">
    <location>
        <begin position="828"/>
        <end position="834"/>
    </location>
</feature>
<feature type="strand" evidence="130">
    <location>
        <begin position="837"/>
        <end position="840"/>
    </location>
</feature>
<feature type="strand" evidence="130">
    <location>
        <begin position="845"/>
        <end position="853"/>
    </location>
</feature>
<feature type="strand" evidence="130">
    <location>
        <begin position="860"/>
        <end position="866"/>
    </location>
</feature>
<feature type="strand" evidence="130">
    <location>
        <begin position="872"/>
        <end position="875"/>
    </location>
</feature>
<feature type="strand" evidence="130">
    <location>
        <begin position="878"/>
        <end position="880"/>
    </location>
</feature>
<feature type="strand" evidence="130">
    <location>
        <begin position="882"/>
        <end position="888"/>
    </location>
</feature>
<feature type="strand" evidence="130">
    <location>
        <begin position="892"/>
        <end position="902"/>
    </location>
</feature>
<feature type="strand" evidence="130">
    <location>
        <begin position="906"/>
        <end position="916"/>
    </location>
</feature>
<feature type="turn" evidence="118">
    <location>
        <begin position="917"/>
        <end position="920"/>
    </location>
</feature>
<feature type="strand" evidence="130">
    <location>
        <begin position="922"/>
        <end position="932"/>
    </location>
</feature>
<feature type="strand" evidence="130">
    <location>
        <begin position="934"/>
        <end position="947"/>
    </location>
</feature>
<feature type="turn" evidence="130">
    <location>
        <begin position="949"/>
        <end position="951"/>
    </location>
</feature>
<feature type="strand" evidence="130">
    <location>
        <begin position="954"/>
        <end position="956"/>
    </location>
</feature>
<feature type="strand" evidence="125">
    <location>
        <begin position="957"/>
        <end position="962"/>
    </location>
</feature>
<feature type="strand" evidence="126">
    <location>
        <begin position="968"/>
        <end position="970"/>
    </location>
</feature>
<feature type="strand" evidence="130">
    <location>
        <begin position="977"/>
        <end position="985"/>
    </location>
</feature>
<feature type="turn" evidence="118">
    <location>
        <begin position="988"/>
        <end position="990"/>
    </location>
</feature>
<feature type="strand" evidence="129">
    <location>
        <begin position="992"/>
        <end position="994"/>
    </location>
</feature>
<feature type="helix" evidence="116">
    <location>
        <begin position="997"/>
        <end position="999"/>
    </location>
</feature>
<feature type="helix" evidence="115">
    <location>
        <begin position="1001"/>
        <end position="1003"/>
    </location>
</feature>
<feature type="strand" evidence="118">
    <location>
        <begin position="1009"/>
        <end position="1012"/>
    </location>
</feature>
<feature type="helix" evidence="115">
    <location>
        <begin position="1013"/>
        <end position="1031"/>
    </location>
</feature>
<feature type="helix" evidence="115">
    <location>
        <begin position="1034"/>
        <end position="1037"/>
    </location>
</feature>
<feature type="helix" evidence="115">
    <location>
        <begin position="1041"/>
        <end position="1057"/>
    </location>
</feature>
<feature type="strand" evidence="135">
    <location>
        <begin position="1059"/>
        <end position="1061"/>
    </location>
</feature>
<feature type="turn" evidence="124">
    <location>
        <begin position="1062"/>
        <end position="1064"/>
    </location>
</feature>
<feature type="strand" evidence="126">
    <location>
        <begin position="1068"/>
        <end position="1072"/>
    </location>
</feature>
<feature type="helix" evidence="115">
    <location>
        <begin position="1076"/>
        <end position="1089"/>
    </location>
</feature>
<feature type="turn" evidence="115">
    <location>
        <begin position="1090"/>
        <end position="1092"/>
    </location>
</feature>
<feature type="helix" evidence="115">
    <location>
        <begin position="1097"/>
        <end position="1111"/>
    </location>
</feature>
<feature type="turn" evidence="112">
    <location>
        <begin position="1114"/>
        <end position="1116"/>
    </location>
</feature>
<feature type="helix" evidence="115">
    <location>
        <begin position="1127"/>
        <end position="1133"/>
    </location>
</feature>
<feature type="strand" evidence="131">
    <location>
        <begin position="1134"/>
        <end position="1138"/>
    </location>
</feature>
<feature type="helix" evidence="115">
    <location>
        <begin position="1139"/>
        <end position="1158"/>
    </location>
</feature>
<feature type="turn" evidence="115">
    <location>
        <begin position="1159"/>
        <end position="1161"/>
    </location>
</feature>
<feature type="helix" evidence="115">
    <location>
        <begin position="1165"/>
        <end position="1179"/>
    </location>
</feature>
<feature type="helix" evidence="115">
    <location>
        <begin position="1180"/>
        <end position="1182"/>
    </location>
</feature>
<feature type="helix" evidence="115">
    <location>
        <begin position="1186"/>
        <end position="1198"/>
    </location>
</feature>
<feature type="helix" evidence="115">
    <location>
        <begin position="1204"/>
        <end position="1213"/>
    </location>
</feature>
<feature type="turn" evidence="115">
    <location>
        <begin position="1216"/>
        <end position="1218"/>
    </location>
</feature>
<feature type="strand" evidence="108">
    <location>
        <begin position="1223"/>
        <end position="1225"/>
    </location>
</feature>
<feature type="helix" evidence="115">
    <location>
        <begin position="1226"/>
        <end position="1243"/>
    </location>
</feature>
<feature type="turn" evidence="115">
    <location>
        <begin position="1246"/>
        <end position="1248"/>
    </location>
</feature>
<feature type="helix" evidence="115">
    <location>
        <begin position="1249"/>
        <end position="1258"/>
    </location>
</feature>
<feature type="strand" evidence="118">
    <location>
        <begin position="1265"/>
        <end position="1267"/>
    </location>
</feature>
<feature type="helix" evidence="115">
    <location>
        <begin position="1269"/>
        <end position="1285"/>
    </location>
</feature>
<feature type="helix" evidence="128">
    <location>
        <begin position="1286"/>
        <end position="1288"/>
    </location>
</feature>
<feature type="turn" evidence="120">
    <location>
        <begin position="1297"/>
        <end position="1299"/>
    </location>
</feature>
<feature type="strand" evidence="114">
    <location>
        <begin position="1303"/>
        <end position="1305"/>
    </location>
</feature>
<feature type="strand" evidence="118">
    <location>
        <begin position="1307"/>
        <end position="1310"/>
    </location>
</feature>
<feature type="turn" evidence="130">
    <location>
        <begin position="1312"/>
        <end position="1315"/>
    </location>
</feature>
<feature type="strand" evidence="125">
    <location>
        <begin position="1320"/>
        <end position="1326"/>
    </location>
</feature>
<feature type="strand" evidence="118">
    <location>
        <begin position="1331"/>
        <end position="1333"/>
    </location>
</feature>
<feature type="strand" evidence="130">
    <location>
        <begin position="1336"/>
        <end position="1350"/>
    </location>
</feature>
<feature type="strand" evidence="130">
    <location>
        <begin position="1356"/>
        <end position="1369"/>
    </location>
</feature>
<feature type="helix" evidence="129">
    <location>
        <begin position="1377"/>
        <end position="1379"/>
    </location>
</feature>
<feature type="strand" evidence="130">
    <location>
        <begin position="1383"/>
        <end position="1392"/>
    </location>
</feature>
<feature type="strand" evidence="130">
    <location>
        <begin position="1394"/>
        <end position="1396"/>
    </location>
</feature>
<feature type="strand" evidence="130">
    <location>
        <begin position="1400"/>
        <end position="1406"/>
    </location>
</feature>
<feature type="strand" evidence="130">
    <location>
        <begin position="1411"/>
        <end position="1413"/>
    </location>
</feature>
<feature type="helix" evidence="130">
    <location>
        <begin position="1415"/>
        <end position="1422"/>
    </location>
</feature>
<feature type="strand" evidence="127">
    <location>
        <begin position="1424"/>
        <end position="1428"/>
    </location>
</feature>
<feature type="helix" evidence="130">
    <location>
        <begin position="1431"/>
        <end position="1434"/>
    </location>
</feature>
<feature type="strand" evidence="130">
    <location>
        <begin position="1438"/>
        <end position="1440"/>
    </location>
</feature>
<feature type="strand" evidence="130">
    <location>
        <begin position="1443"/>
        <end position="1449"/>
    </location>
</feature>
<feature type="strand" evidence="130">
    <location>
        <begin position="1453"/>
        <end position="1455"/>
    </location>
</feature>
<feature type="strand" evidence="130">
    <location>
        <begin position="1457"/>
        <end position="1465"/>
    </location>
</feature>
<feature type="strand" evidence="109">
    <location>
        <begin position="1469"/>
        <end position="1471"/>
    </location>
</feature>
<feature type="strand" evidence="130">
    <location>
        <begin position="1475"/>
        <end position="1481"/>
    </location>
</feature>
<feature type="strand" evidence="130">
    <location>
        <begin position="1485"/>
        <end position="1493"/>
    </location>
</feature>
<feature type="strand" evidence="130">
    <location>
        <begin position="1495"/>
        <end position="1497"/>
    </location>
</feature>
<feature type="helix" evidence="130">
    <location>
        <begin position="1498"/>
        <end position="1500"/>
    </location>
</feature>
<feature type="strand" evidence="130">
    <location>
        <begin position="1504"/>
        <end position="1507"/>
    </location>
</feature>
<feature type="strand" evidence="130">
    <location>
        <begin position="1510"/>
        <end position="1516"/>
    </location>
</feature>
<feature type="strand" evidence="110">
    <location>
        <begin position="1518"/>
        <end position="1520"/>
    </location>
</feature>
<feature type="strand" evidence="130">
    <location>
        <begin position="1524"/>
        <end position="1526"/>
    </location>
</feature>
<feature type="helix" evidence="130">
    <location>
        <begin position="1529"/>
        <end position="1536"/>
    </location>
</feature>
<feature type="strand" evidence="111">
    <location>
        <begin position="1537"/>
        <end position="1540"/>
    </location>
</feature>
<feature type="strand" evidence="130">
    <location>
        <begin position="1541"/>
        <end position="1553"/>
    </location>
</feature>
<feature type="strand" evidence="130">
    <location>
        <begin position="1556"/>
        <end position="1570"/>
    </location>
</feature>
<feature type="turn" evidence="126">
    <location>
        <begin position="1577"/>
        <end position="1579"/>
    </location>
</feature>
<feature type="strand" evidence="130">
    <location>
        <begin position="1581"/>
        <end position="1587"/>
    </location>
</feature>
<feature type="helix" evidence="130">
    <location>
        <begin position="1588"/>
        <end position="1593"/>
    </location>
</feature>
<feature type="strand" evidence="130">
    <location>
        <begin position="1601"/>
        <end position="1607"/>
    </location>
</feature>
<feature type="helix" evidence="130">
    <location>
        <begin position="1608"/>
        <end position="1610"/>
    </location>
</feature>
<feature type="strand" evidence="130">
    <location>
        <begin position="1611"/>
        <end position="1613"/>
    </location>
</feature>
<feature type="helix" evidence="130">
    <location>
        <begin position="1615"/>
        <end position="1617"/>
    </location>
</feature>
<feature type="strand" evidence="130">
    <location>
        <begin position="1619"/>
        <end position="1621"/>
    </location>
</feature>
<feature type="strand" evidence="130">
    <location>
        <begin position="1627"/>
        <end position="1631"/>
    </location>
</feature>
<feature type="helix" evidence="130">
    <location>
        <begin position="1634"/>
        <end position="1636"/>
    </location>
</feature>
<feature type="strand" evidence="110">
    <location>
        <begin position="1637"/>
        <end position="1639"/>
    </location>
</feature>
<feature type="helix" evidence="130">
    <location>
        <begin position="1640"/>
        <end position="1642"/>
    </location>
</feature>
<feature type="helix" evidence="130">
    <location>
        <begin position="1643"/>
        <end position="1658"/>
    </location>
</feature>
<accession>P01024</accession>
<accession>A7E236</accession>
<proteinExistence type="evidence at protein level"/>
<comment type="function">
    <text evidence="11 26 49 55 59 62 63">Precursor of non-enzymatic components of the classical, alternative, lectin and GZMK complement pathways, which consist in a cascade of proteins that leads to phagocytosis and breakdown of pathogens and signaling that strengthens the adaptive immune system.</text>
</comment>
<comment type="function">
    <molecule>Complement C3b</molecule>
    <text evidence="11 26 42 49 55 57 58 62 63 65 74 75">Non-enzymatic component of C5 convertase (PubMed:28264884, PubMed:31507604, PubMed:3653927, PubMed:3897448). Generated following cleavage by C3 convertase, it covalently attaches to the surface of pathogens, where it acts as an opsonin that marks the surface of antigens for removal (PubMed:28264884, PubMed:31507604, PubMed:3653927, PubMed:3897448, PubMed:833545, PubMed:8349625). Complement C3b binds covalently via its reactive thioester, to cell surface carbohydrates or immune aggregates (PubMed:6903192). Together with complement C4b, it then recruits the serine protease complement C2b to form the C5 convertase, which cleaves and activate C5, the next component of the complement pathways (PubMed:12878586, PubMed:18204047, PubMed:2387864). In the alternative complement pathway, recruits the serine protease CFB to form the C5 convertase that cleaves and activates C5 (PubMed:624565, PubMed:6554279).</text>
</comment>
<comment type="function">
    <molecule>C3a anaphylatoxin</molecule>
    <text evidence="68 78 85">Mediator of local inflammatory process released following cleavage by C3 convertase (PubMed:6968751). Acts by binding to its receptor, C3AR1, activating G protein-coupled receptor signaling, promoting the phosphorylation, ARRB2-mediated internalization and endocytosis of C3AR1 (PubMed:8702752). C3a anaphylatoxin stimulates the activation of immune cells such as mast cells and basophilic leukocytes to release inflammation agents, such as cytokines, chemokines and histamine, which promote inflammation development (PubMed:23383423). Also acts as potent chemoattractant for the migration of macrophages and neutrophils to the inflamed tissues, resulting in neutralization of the inflammatory triggers by multiple ways, such as phagocytosis and generation of reactive oxidants (PubMed:23383423).</text>
</comment>
<comment type="function">
    <molecule>Acylation stimulating protein</molecule>
    <text evidence="5 7 9 14 17 30 52 76 79">Adipogenic hormone that stimulates triglyceride synthesis and glucose transport in adipocytes, regulating fat storage and playing a role in postprandial triglyceride clearance (PubMed:10432298, PubMed:15833747, PubMed:16333141, PubMed:19615750, PubMed:2909530, PubMed:8376604, PubMed:9059512). Appears to stimulate triglyceride synthesis via activation of the PLC, MAPK and AKT signaling pathways (PubMed:16333141). Acts by binding to its receptor, C5AR2, activating G protein-coupled receptor signaling, promoting the phosphorylation, ARRB2-mediated internalization and endocytosis of C5AR2 (PubMed:11773063, PubMed:12540846, PubMed:19615750).</text>
</comment>
<comment type="function">
    <molecule>C3-beta-c</molecule>
    <text evidence="1">Acts as a chemoattractant for neutrophils in chronic inflammation.</text>
</comment>
<comment type="activity regulation">
    <text evidence="19">Complement activation is inhibited by VSIG4.</text>
</comment>
<comment type="subunit">
    <text evidence="69">In absence of complement activation, the C3 precursor is first processed by the removal of 4 Arg residues, forming two chains, beta and alpha, linked by a disulfide bond.</text>
</comment>
<comment type="subunit">
    <molecule>Complement C3b</molecule>
    <text evidence="11 19 22 26 36 42 49 51 53 54 55 56 62 63 67 73 81">Complement C3b is composed of complement C3b and complement C3 beta chains that are associated via disulfide bonds (PubMed:28671664). Non-enzymatic component of the C5 convertase, also named C4bC2bC3b, composed of the serine protease complement C2b (C2), complement C3b, as well as complement C4b (C4) (PubMed:12878586, PubMed:17051150, PubMed:1740458, PubMed:18204047, PubMed:2387864). Non-enzymatic component of the C5 convertase of the alternative complement pathways composed of the serine protease complement CFB and complement C3b (PubMed:30643019, PubMed:3638964, PubMed:624565, PubMed:6554279, PubMed:6919543, PubMed:9748277). Interacts with CFP; interaction takes place together with CFB in the alternative complement system and allows the complex to become active (PubMed:28264884, PubMed:31507604). Interacts with CR1 (via Sushi 8 and Sushi 9 domains) (PubMed:2972794, PubMed:8175757). Interacts with CFH (PubMed:21285368).</text>
</comment>
<comment type="subunit">
    <molecule>Complement C3d fragment</molecule>
    <text evidence="34 36 37">Interacts with CFH (PubMed:21285368, PubMed:21317894). Interacts with CR2 (PubMed:20951140).</text>
</comment>
<comment type="subunit">
    <molecule>Complement C3dg fragment</molecule>
    <text evidence="6 32 39 71">During pregnancy, C3dg exists as a complex (probably a 2:2:2 heterohexamer) with AGT and the proform of PRG2 (PubMed:7539791). Interacts with CR2 (via the N-terminal Sushi domains 1 and 2) (PubMed:11387479, PubMed:20083651, PubMed:21527715).</text>
</comment>
<comment type="subunit">
    <text evidence="50">(Microbial infection) C3b interacts with herpes simplex virus 1 (HHV-1) and herpes simplex virus 2 (HHV-2) envelope glycoprotein C; this interaction inhibits the activation of the complement system.</text>
</comment>
<comment type="subunit">
    <text evidence="28 32 35">(Microbial infection) Interacts with Staphylococcus aureus immunoglobulin-binding protein Sbi; this interaction prevents the association between C3dg and CR2.</text>
</comment>
<comment type="subunit">
    <text evidence="21">(Microbial infection) Interacts with Staphylococcus aureus protein Fib.</text>
</comment>
<comment type="interaction">
    <interactant intactId="EBI-905851">
        <id>P01024</id>
    </interactant>
    <interactant intactId="EBI-712648">
        <id>O95994</id>
        <label>AGR2</label>
    </interactant>
    <organismsDiffer>false</organismsDiffer>
    <experiments>3</experiments>
</comment>
<comment type="interaction">
    <interactant intactId="EBI-905851">
        <id>P01024</id>
    </interactant>
    <interactant intactId="EBI-1038838">
        <id>Q13936</id>
        <label>CACNA1C</label>
    </interactant>
    <organismsDiffer>false</organismsDiffer>
    <experiments>2</experiments>
</comment>
<comment type="interaction">
    <interactant intactId="EBI-905851">
        <id>P01024</id>
    </interactant>
    <interactant intactId="EBI-2623451">
        <id>P15529</id>
        <label>CD46</label>
    </interactant>
    <organismsDiffer>false</organismsDiffer>
    <experiments>2</experiments>
</comment>
<comment type="interaction">
    <interactant intactId="EBI-905851">
        <id>P01024</id>
    </interactant>
    <interactant intactId="EBI-1223668">
        <id>P00751</id>
        <label>CFB</label>
    </interactant>
    <organismsDiffer>false</organismsDiffer>
    <experiments>3</experiments>
</comment>
<comment type="interaction">
    <interactant intactId="EBI-905851">
        <id>P01024</id>
    </interactant>
    <interactant intactId="EBI-1223708">
        <id>P08603</id>
        <label>CFH</label>
    </interactant>
    <organismsDiffer>false</organismsDiffer>
    <experiments>6</experiments>
</comment>
<comment type="interaction">
    <interactant intactId="EBI-905851">
        <id>P01024</id>
    </interactant>
    <interactant intactId="EBI-22118464">
        <id>PRO_0000005896</id>
        <label>CFHR1</label>
        <dbReference type="UniProtKB" id="Q03591"/>
    </interactant>
    <organismsDiffer>false</organismsDiffer>
    <experiments>2</experiments>
</comment>
<comment type="interaction">
    <interactant intactId="EBI-905851">
        <id>P01024</id>
    </interactant>
    <interactant intactId="EBI-22033617">
        <id>Q92496-1</id>
        <label>CFHR4</label>
    </interactant>
    <organismsDiffer>false</organismsDiffer>
    <experiments>5</experiments>
</comment>
<comment type="interaction">
    <interactant intactId="EBI-905851">
        <id>P01024</id>
    </interactant>
    <interactant intactId="EBI-2872467">
        <id>P20023</id>
        <label>CR2</label>
    </interactant>
    <organismsDiffer>false</organismsDiffer>
    <experiments>4</experiments>
</comment>
<comment type="interaction">
    <interactant intactId="EBI-905851">
        <id>P01024</id>
    </interactant>
    <interactant intactId="EBI-743414">
        <id>O95967</id>
        <label>EFEMP2</label>
    </interactant>
    <organismsDiffer>false</organismsDiffer>
    <experiments>3</experiments>
</comment>
<comment type="interaction">
    <interactant intactId="EBI-905851">
        <id>P01024</id>
    </interactant>
    <interactant intactId="EBI-5916454">
        <id>A6NEM1</id>
        <label>GOLGA6L9</label>
    </interactant>
    <organismsDiffer>false</organismsDiffer>
    <experiments>3</experiments>
</comment>
<comment type="interaction">
    <interactant intactId="EBI-905851">
        <id>P01024</id>
    </interactant>
    <interactant intactId="EBI-11173743">
        <id>O60741</id>
        <label>HCN1</label>
    </interactant>
    <organismsDiffer>false</organismsDiffer>
    <experiments>7</experiments>
</comment>
<comment type="interaction">
    <interactant intactId="EBI-905851">
        <id>P01024</id>
    </interactant>
    <interactant intactId="EBI-948001">
        <id>Q15323</id>
        <label>KRT31</label>
    </interactant>
    <organismsDiffer>false</organismsDiffer>
    <experiments>3</experiments>
</comment>
<comment type="interaction">
    <interactant intactId="EBI-905851">
        <id>P01024</id>
    </interactant>
    <interactant intactId="EBI-10171774">
        <id>P60410</id>
        <label>KRTAP10-8</label>
    </interactant>
    <organismsDiffer>false</organismsDiffer>
    <experiments>3</experiments>
</comment>
<comment type="interaction">
    <interactant intactId="EBI-905851">
        <id>P01024</id>
    </interactant>
    <interactant intactId="EBI-742388">
        <id>Q9H8W4</id>
        <label>PLEKHF2</label>
    </interactant>
    <organismsDiffer>false</organismsDiffer>
    <experiments>3</experiments>
</comment>
<comment type="interaction">
    <interactant intactId="EBI-905851">
        <id>P01024</id>
    </interactant>
    <interactant intactId="EBI-903144">
        <id>Q9Y279-1</id>
        <label>VSIG4</label>
    </interactant>
    <organismsDiffer>false</organismsDiffer>
    <experiments>5</experiments>
</comment>
<comment type="interaction">
    <interactant intactId="EBI-905851">
        <id>P01024</id>
    </interactant>
    <interactant intactId="EBI-903148">
        <id>Q9Y279-2</id>
        <label>VSIG4</label>
    </interactant>
    <organismsDiffer>false</organismsDiffer>
    <experiments>2</experiments>
</comment>
<comment type="interaction">
    <interactant intactId="EBI-6863145">
        <id>PRO_0000005908</id>
    </interactant>
    <interactant intactId="EBI-12735725">
        <id>PRO_0000005911</id>
        <label>C3</label>
        <dbReference type="UniProtKB" id="P01024"/>
    </interactant>
    <organismsDiffer>false</organismsDiffer>
    <experiments>9</experiments>
</comment>
<comment type="interaction">
    <interactant intactId="EBI-6863145">
        <id>PRO_0000005908</id>
    </interactant>
    <interactant intactId="EBI-1223708">
        <id>P08603</id>
        <label>CFH</label>
    </interactant>
    <organismsDiffer>false</organismsDiffer>
    <experiments>4</experiments>
</comment>
<comment type="interaction">
    <interactant intactId="EBI-12735725">
        <id>PRO_0000005911</id>
    </interactant>
    <interactant intactId="EBI-22033638">
        <id>Q92496-3</id>
        <label>CFHR4</label>
    </interactant>
    <organismsDiffer>false</organismsDiffer>
    <experiments>3</experiments>
</comment>
<comment type="interaction">
    <interactant intactId="EBI-21988425">
        <id>PRO_0000005913</id>
    </interactant>
    <interactant intactId="EBI-21988278">
        <id>PRO_0000005897</id>
        <label>CFHR2</label>
        <dbReference type="UniProtKB" id="P36980"/>
    </interactant>
    <organismsDiffer>false</organismsDiffer>
    <experiments>2</experiments>
</comment>
<comment type="interaction">
    <interactant intactId="EBI-6863106">
        <id>PRO_0000005915</id>
    </interactant>
    <interactant intactId="EBI-1223708">
        <id>P08603</id>
        <label>CFH</label>
    </interactant>
    <organismsDiffer>false</organismsDiffer>
    <experiments>2</experiments>
</comment>
<comment type="interaction">
    <interactant intactId="EBI-6863106">
        <id>PRO_0000005915</id>
    </interactant>
    <interactant intactId="EBI-21988278">
        <id>PRO_0000005897</id>
        <label>CFHR2</label>
        <dbReference type="UniProtKB" id="P36980"/>
    </interactant>
    <organismsDiffer>false</organismsDiffer>
    <experiments>3</experiments>
</comment>
<comment type="subcellular location">
    <subcellularLocation>
        <location evidence="69">Secreted</location>
    </subcellularLocation>
</comment>
<comment type="subcellular location">
    <molecule>Complement C3b</molecule>
    <subcellularLocation>
        <location evidence="57 58 65 74 75">Secreted</location>
    </subcellularLocation>
    <subcellularLocation>
        <location evidence="57 58 65 74 75">Cell surface</location>
    </subcellularLocation>
    <text evidence="57 58 65 74 75">Covalently associated with the surface of pathogens: the internal thioester bond reacts with carbohydrate antigens on the target surface to form amide or ester bonds.</text>
</comment>
<comment type="subcellular location">
    <molecule>C3a anaphylatoxin</molecule>
    <subcellularLocation>
        <location evidence="8">Secreted</location>
    </subcellularLocation>
</comment>
<comment type="tissue specificity">
    <text evidence="80">Plasma.</text>
</comment>
<comment type="tissue specificity">
    <molecule>Acylation stimulating protein</molecule>
    <text evidence="14">Produced in adipocytes and released into the plasma during both the fasting and postprandial periods.</text>
</comment>
<comment type="PTM">
    <text evidence="49 55 56 59 64 66 67 69 81">C3 precursor is first processed by the removal of 4 Arg residues, forming two chains, beta and alpha, linked by a disulfide bond (PubMed:7240134). During activation of the complement systems, the alpha chain is cleaved into C3a and C3b by the C3 convertase: C3b stays linked to the beta chain, while C3a is released in the plasma (PubMed:6611150, PubMed:6906228). The alpha chain is cleaved by the serine protease complement C2b component of the C3 convertase to generate C3a and C3b following activation by the classical, lectin and GZMK complement systems (PubMed:39914456, PubMed:6611150, PubMed:6906228). The alpha chain is cleaved by CFB component of the C3 convertase to generate C3a and C3b following activation by the alternative complement system (PubMed:28264884, PubMed:31507604, PubMed:3638964, PubMed:6919543, PubMed:9748277).</text>
</comment>
<comment type="PTM">
    <molecule>C3a anaphylatoxin</molecule>
    <text evidence="14 60 68">C3a is further processed by carboxypeptidases to release the C-terminal arginine residue generating the acylation stimulating protein (ASP) (PubMed:4098172, PubMed:6968751). Levels of ASP are increased in adipocytes in the postprandial period and by insulin and dietary chylomicrons (PubMed:15833747).</text>
</comment>
<comment type="PTM">
    <molecule>Complement C3b</molecule>
    <text evidence="15 19 20 24 51 70 71">Complement C3b is rapidly split in two positions by factor I (CFI) and a cofactor (CFH) to form iC3b (inactivated C3b) and C3f which is released (PubMed:17320177, PubMed:28671664, PubMed:7360115). CFI and CFH catalyze proteolytic degradation of already-deposited complement C3b (PubMed:28671664). Then iC3b is slowly cleaved (possibly by CFI) to form C3c (beta chain + alpha' chain fragment 1 + alpha' chain fragment 2), C3dg and C3f (PubMed:16177781, PubMed:17051150, PubMed:17684013). Other proteases produce other fragments such as C3d or C3g (PubMed:7539791).</text>
</comment>
<comment type="PTM">
    <molecule>Complement C3b</molecule>
    <text evidence="65">Upon activation, the internal thioester bond reacts with carbohydrate antigens on the target surface to form amide or ester bonds, leading to covalent association with the surface of pathogens.</text>
</comment>
<comment type="PTM">
    <molecule>Complement C3b</molecule>
    <text evidence="22 42">Complement C3b interacts with complement C4b via a thioester linkage.</text>
</comment>
<comment type="PTM">
    <text evidence="48">Phosphorylated by FAM20C in the extracellular medium.</text>
</comment>
<comment type="PTM">
    <text evidence="38">(Microbial infection) C3 is cleaved by Staphylococcus aureus aureolysin; this cleavage renders C3a and C3b inactive. C3b is rapidly degraded by host factors CFH and CFI preventing its deposition on the bacterial surface while C3a is further inactivated by aureolysin.</text>
</comment>
<comment type="PTM">
    <text evidence="25">(Microbial infection) Complement C3 beta chain is cleaved and inactivated by S.pyogenes SpeB.</text>
</comment>
<comment type="PTM">
    <text evidence="44">(Microbial infection) Cleaved by N.meningitidis NalP between Leu-744 and Gly-745, generating a slightly shorter C3 alpha form and a slightly longer C3 beta form. The C3b-like fragment is degraded in the presence of the complement regulators CFH and CFI, preventing its deposition on the bacterial surface.</text>
</comment>
<comment type="polymorphism">
    <text>There are two alleles: C3S (C3 slow), the most common allele in all races and C3F (C3 fast), relatively frequent in Caucasians, less common in Black Americans, extremely rare in Orientals.</text>
</comment>
<comment type="disease" evidence="72">
    <disease id="DI-01307">
        <name>Complement component 3 deficiency</name>
        <acronym>C3D</acronym>
        <description>A rare defect of the complement classical pathway. Patients develop recurrent, severe, pyogenic infections because of ineffective opsonization of pathogens. Some patients may also develop autoimmune disorders, such as arthralgia and vasculitic rashes, lupus-like syndrome and membranoproliferative glomerulonephritis.</description>
        <dbReference type="MIM" id="613779"/>
    </disease>
    <text>The disease is caused by variants affecting the gene represented in this entry.</text>
</comment>
<comment type="disease" evidence="23 43">
    <disease id="DI-00062">
        <name>Macular degeneration, age-related, 9</name>
        <acronym>ARMD9</acronym>
        <description>A form of age-related macular degeneration, a multifactorial eye disease and the most common cause of irreversible vision loss in the developed world. In most patients, the disease is manifest as ophthalmoscopically visible yellowish accumulations of protein and lipid that lie beneath the retinal pigment epithelium and within an elastin-containing structure known as Bruch membrane.</description>
        <dbReference type="MIM" id="611378"/>
    </disease>
    <text>Disease susceptibility is associated with variants affecting the gene represented in this entry.</text>
</comment>
<comment type="disease" evidence="27 33">
    <disease id="DI-02600">
        <name>Hemolytic uremic syndrome, atypical, 5</name>
        <acronym>AHUS5</acronym>
        <description>An atypical form of hemolytic uremic syndrome. It is a complex genetic disease characterized by microangiopathic hemolytic anemia, thrombocytopenia, renal failure and absence of episodes of enterocolitis and diarrhea. In contrast to typical hemolytic uremic syndrome, atypical forms have a poorer prognosis, with higher death rates and frequent progression to end-stage renal disease.</description>
        <dbReference type="MIM" id="612925"/>
    </disease>
    <text>Disease susceptibility is associated with variants affecting the gene represented in this entry. Other genes may play a role in modifying the phenotype.</text>
</comment>
<comment type="disease">
    <text>Increased levels of C3 and its cleavage product ASP, are associated with obesity, diabetes and coronary heart disease. Short-term endurance training reduces baseline ASP levels and subsequently fat storage.</text>
</comment>
<comment type="caution">
    <text evidence="6 39">An article reported the interaction surface between C3 and CR2 (PubMed:11387479). According to a another paper, it is however an artifact and can be ascribed to the presence of zinc acetate in the buffer (PubMed:21527715).</text>
</comment>
<comment type="caution">
    <text evidence="45 47">The difference between allele C3S (C3 slow) and allele C3F (C3 fast) was reported to be caused by a an Asn at position 1216 instead of an Asp (PubMed:2473125). The paper was however retracted (PubMed:2584723).</text>
</comment>
<comment type="online information" name="C3base">
    <link uri="https://databases.lovd.nl/shared/genes/C3"/>
    <text>C3 mutation db</text>
</comment>
<comment type="online information" name="Wikipedia">
    <link uri="https://en.wikipedia.org/wiki/Complement_c3"/>
    <text>Complement C3 entry</text>
</comment>
<sequence length="1663" mass="187148">MGPTSGPSLLLLLLTHLPLALGSPMYSIITPNILRLESEETMVLEAHDAQGDVPVTVTVHDFPGKKLVLSSEKTVLTPATNHMGNVTFTIPANREFKSEKGRNKFVTVQATFGTQVVEKVVLVSLQSGYLFIQTDKTIYTPGSTVLYRIFTVNHKLLPVGRTVMVNIENPEGIPVKQDSLSSQNQLGVLPLSWDIPELVNMGQWKIRAYYENSPQQVFSTEFEVKEYVLPSFEVIVEPTEKFYYIYNEKGLEVTITARFLYGKKVEGTAFVIFGIQDGEQRISLPESLKRIPIEDGSGEVVLSRKVLLDGVQNPRAEDLVGKSLYVSATVILHSGSDMVQAERSGIPIVTSPYQIHFTKTPKYFKPGMPFDLMVFVTNPDGSPAYRVPVAVQGEDTVQSLTQGDGVAKLSINTHPSQKPLSITVRTKKQELSEAEQATRTMQALPYSTVGNSNNYLHLSVLRTELRPGETLNVNFLLRMDRAHEAKIRYYTYLIMNKGRLLKAGRQVREPGQDLVVLPLSITTDFIPSFRLVAYYTLIGASGQREVVADSVWVDVKDSCVGSLVVKSGQSEDRQPVPGQQMTLKIEGDHGARVVLVAVDKGVFVLNKKNKLTQSKIWDVVEKADIGCTPGSGKDYAGVFSDAGLTFTSSSGQQTAQRAELQCPQPAARRRRSVQLTEKRMDKVGKYPKELRKCCEDGMRENPMRFSCQRRTRFISLGEACKKVFLDCCNYITELRRQHARASHLGLARSNLDEDIIAEENIVSRSEFPESWLWNVEDLKEPPKNGISTKLMNIFLKDSITTWEILAVSMSDKKGICVADPFEVTVMQDFFIDLRLPYSVVRNEQVEIRAVLYNYRQNQELKVRVELLHNPAFCSLATTKRRHQQTVTIPPKSSLSVPYVIVPLKTGLQEVEVKAAVYHHFISDGVRKSLKVVPEGIRMNKTVAVRTLDPERLGREGVQKEDIPPADLSDQVPDTESETRILLQGTPVAQMTEDAVDAERLKHLIVTPSGCGEQNMIGMTPTVIAVHYLDETEQWEKFGLEKRQGALELIKKGYTQQLAFRQPSSAFAAFVKRAPSTWLTAYVVKVFSLAVNLIAIDSQVLCGAVKWLILEKQKPDGVFQEDAPVIHQEMIGGLRNNNEKDMALTAFVLISLQEAKDICEEQVNSLPGSITKAGDFLEANYMNLQRSYTVAIAGYALAQMGRLKGPLLNKFLTTAKDKNRWEDPGKQLYNVEATSYALLALLQLKDFDFVPPVVRWLNEQRYYGGGYGSTQATFMVFQALAQYQKDAPDHQELNLDVSLQLPSRSSKITHRIHWESASLLRSEETKENEGFTVTAEGKGQGTLSVVTMYHAKAKDQLTCNKFDLKVTIKPAPETEKRPQDAKNTMILEICTRYRGDQDATMSILDISMMTGFAPDTDDLKQLANGVDRYISKYELDKAFSDRNTLIIYLDKVSHSEDDCLAFKVHQYFNVELIQPGAVKVYAYYNLEESCTRFYHPEKEDGKLNKLCRDELCRCAEENCFIQKSDDKVTLEERLDKACEPGVDYVYKTRLVKVQLSNDFDEYIMAIEQTIKSGSDEVQVGQQRTFISPIKCREALKLEEKKHYLMWGLSSDFWGEKPNLSYIIGKDTWVEHWPEEDECQDEENQKQCQDLGAFTESMVVFGCPN</sequence>